<comment type="function">
    <text evidence="1 7 9 10 12 13 14 15 18 23 24 28 33 34 37 39 40 42 47 48 49 52 53 54 58 61 62 63 64">Multifunctional ATP-dependent nucleic acid helicase that unwinds DNA and RNA in a 3' to 5' direction and that plays important roles in many processes, such as DNA replication, transcriptional activation, post-transcriptional RNA regulation, mRNA translation and RNA-mediated gene silencing (PubMed:11416126, PubMed:12711669, PubMed:15355351, PubMed:16680162, PubMed:17531811, PubMed:20669935, PubMed:21561811, PubMed:24049074, PubMed:24990949, PubMed:25062910, PubMed:28221134, PubMed:9111062, PubMed:37467750). Requires a 3'-single-stranded tail as entry site for acid nuclei unwinding activities as well as the binding and hydrolyzing of any of the four ribo- or deoxyribo-nucleotide triphosphates (NTPs) (PubMed:1537828). Unwinds numerous nucleic acid substrates such as double-stranded (ds) DNA and RNA, DNA:RNA hybrids, DNA and RNA forks composed of either partially complementary DNA duplexes or DNA:RNA hybrids, respectively, and also DNA and RNA displacement loops (D- and R-loops), triplex-helical DNA (H-DNA) structure and DNA and RNA-based G-quadruplexes (PubMed:20669935, PubMed:21561811, PubMed:24049074). Binds dsDNA, single-stranded DNA (ssDNA), dsRNA, ssRNA and poly(A)-containing RNA (PubMed:10198287, PubMed:9111062). Also binds to circular dsDNA or dsRNA of either linear and/or circular forms and stimulates the relaxation of supercoiled DNAs catalyzed by topoisomerase TOP2A (PubMed:12711669). Plays a role in DNA replication at origins of replication and cell cycle progression (PubMed:24990949). Plays a role as a transcriptional coactivator acting as a bridging factor between polymerase II holoenzyme and transcription factors or cofactors, such as BRCA1, CREBBP, RELA and SMN1 (PubMed:11038348, PubMed:11149922, PubMed:11416126, PubMed:15355351, PubMed:28221134, PubMed:9323138, PubMed:9662397). Binds to the CDKN2A promoter (PubMed:11038348). Plays several roles in post-transcriptional regulation of gene expression (PubMed:28221134, PubMed:28355180). In cooperation with NUP98, promotes pre-mRNA alternative splicing activities of a subset of genes (PubMed:11402034, PubMed:16680162, PubMed:28221134, PubMed:28355180). As component of a large PER complex, is involved in the negative regulation of 3' transcriptional termination of circadian target genes such as PER1 and NR1D1 and the control of the circadian rhythms (By similarity). Also acts as a nuclear resolvase that is able to bind and neutralize harmful massive secondary double-stranded RNA structures formed by inverted-repeat Alu retrotransposon elements that are inserted and transcribed as parts of genes during the process of gene transposition (PubMed:28355180). Involved in the positive regulation of nuclear export of constitutive transport element (CTE)-containing unspliced mRNA (PubMed:10924507, PubMed:11402034, PubMed:9162007). Component of the coding region determinant (CRD)-mediated complex that promotes cytoplasmic MYC mRNA stability (PubMed:19029303). Plays a role in mRNA translation (PubMed:28355180). Positively regulates translation of selected mRNAs through its binding to post-transcriptional control element (PCE) in the 5'-untranslated region (UTR) (PubMed:16680162). Involved with LARP6 in the translation stimulation of type I collagen mRNAs for CO1A1 and CO1A2 through binding of a specific stem-loop structure in their 5'-UTRs (PubMed:22190748). Stimulates LIN28A-dependent mRNA translation probably by facilitating ribonucleoprotein remodeling during the process of translation (PubMed:21247876). Plays also a role as a small interfering (siRNA)-loading factor involved in the RNA-induced silencing complex (RISC) loading complex (RLC) assembly, and hence functions in the RISC-mediated gene silencing process (PubMed:17531811). Binds preferentially to short double-stranded RNA, such as those produced during rotavirus intestinal infection (PubMed:28636595). This interaction may mediate NLRP9 inflammasome activation and trigger inflammatory response, including IL18 release and pyroptosis (PubMed:28636595). Finally, mediates the attachment of heterogeneous nuclear ribonucleoproteins (hnRNPs) to actin filaments in the nucleus (PubMed:11687588).</text>
</comment>
<comment type="function">
    <text evidence="11 28 35 38 41 50 51 65">(Microbial infection) Plays a role in HIV-1 replication and virion infectivity (PubMed:11096080, PubMed:19229320, PubMed:25149208, PubMed:27107641). Enhances HIV-1 transcription by facilitating the binding of RNA polymerase II holoenzyme to the proviral DNA (PubMed:11096080, PubMed:25149208). Binds (via DRBM domain 2) to the HIV-1 TAR RNA and stimulates HIV-1 transcription of transactivation response element (TAR)-containing mRNAs (PubMed:11096080, PubMed:9892698). Involved also in HIV-1 mRNA splicing and transport (PubMed:25149208). Positively regulates HIV-1 gag mRNA translation, through its binding to post-transcriptional control element (PCE) in the 5'-untranslated region (UTR) (PubMed:16680162). Binds (via DRBM domains) to a HIV-1 double-stranded RNA region of the primer binding site (PBS)-segment of the 5'-UTR, and hence stimulates DHX9 incorporation into virions and virion infectivity (PubMed:27107641). Also plays a role as a cytosolic viral MyD88-dependent DNA and RNA sensors in plasmacytoid dendritic cells (pDCs), and hence induce antiviral innate immune responses (PubMed:20696886, PubMed:21957149). Binds (via the OB-fold region) to viral single-stranded DNA unmethylated C-phosphate-G (CpG) oligonucleotide (PubMed:20696886).</text>
</comment>
<comment type="catalytic activity">
    <reaction evidence="14 24 36 37 47 49 60">
        <text>ATP + H2O = ADP + phosphate + H(+)</text>
        <dbReference type="Rhea" id="RHEA:13065"/>
        <dbReference type="ChEBI" id="CHEBI:15377"/>
        <dbReference type="ChEBI" id="CHEBI:15378"/>
        <dbReference type="ChEBI" id="CHEBI:30616"/>
        <dbReference type="ChEBI" id="CHEBI:43474"/>
        <dbReference type="ChEBI" id="CHEBI:456216"/>
        <dbReference type="EC" id="3.6.4.13"/>
    </reaction>
</comment>
<comment type="subunit">
    <text evidence="1 9 12 13 14 15 17 18 19 21 22 23 25 26 27 28 29 30 31 32 33 34 35 38 39 41 42 43 44 45 46 52 53 54 63 64">Component of the coding region determinant (CRD)-mediated complex, composed of DHX9, HNRNPU, IGF2BP1, SYNCRIP and YBX1 (PubMed:19029303). Identified in a mRNP complex, at least composed of DHX9, DDX3X, ELAVL1, HNRNPU, IGF2BP1, ILF3, PABPC1, PCBP2, PTBP2, STAU1, STAU2, SYNCRIP and YBX1 (PubMed:19029303). Identified in a IGF2BP1-dependent mRNP granule complex containing untranslated mRNAs (PubMed:17289661). The large PER complex involved in the repression of transcriptional termination is composed of at least PER2, CDK9, DDX5, DHX9, NCBP1 and POLR2A (active) (By similarity). Associates (via DRBM domains) with the RISC complex; this association occurs in a small interfering (siRNA)-dependent manner (PubMed:17531811, PubMed:23361462). Associates with the SMN complex; this association induces recruitment of DHX9 to the RNA polymerase II (ref.8). Associates with polysomes in a LIN28A-dependent manner (PubMed:16680162, PubMed:21247876). Interacts (via C-terminus) with ACTB; this interaction is direct and mediates the attachment to nuclear ribonucleoprotein complexes (PubMed:11687588). Interacts with ADAR isoform 1; this interaction occurs in a RNA-independent manner (PubMed:28355180). Interacts (via DRBM domains) with AGO2 (via middle region); this interaction promotes active RISC assembly by promoting the association of siRNA with AGO2 (PubMed:17531811, PubMed:23361462). Interacts (via RGG region) with AKAP8L (via N-terminus) (PubMed:11402034). Interacts with BRCA1 (via C-terminus); this interaction is direct and links BRCA1 to the RNA polymerase II holoenzyme (PubMed:9662397). Interacts (via N-terminus) with CREBBP; this interaction mediates association with RNA polymerase II holoenzyme and stimulates CREB-dependent transcriptional activation (PubMed:9323138). Interacts (via N-terminus) with EIF2AK2/PKR; this interaction is dependent upon the activation of the kinase (PubMed:19229320). Interacts (via DRBM domains) with DICER1 (PubMed:17531811). Interacts with H2AX; this interaction is direct, requires phosphorylation of histone H2AX on 'Ser-140' by PRKDC and promotes binding of DHX9 to transcriptionally stalled sites on chromosomal DNA in response to genotoxic stress (PubMed:15613478, PubMed:17498979). Interacts with HNRNPC; this interaction is direct, enhanced probably by their concomitant binding to RNA and mediates the attachment to actin filaments (PubMed:11687588). Interacts (via RGG region) with PRMT1 (PubMed:15084609). Interacts with IGF2BP1 (PubMed:17289661, PubMed:23640942). Interacts with IGF2BP2, IGF2BP3 (PubMed:23640942). Interacts (via DRBM domains) with ILF3; this interaction occurs in a RNA-independent manner (PubMed:12946349). Interacts with Importin alpha/Importin beta receptor (PubMed:16375861). Interacts with LARP6 (via C-terminus); this interaction occurs in a mRNA-independent manner (PubMed:22190748). Interacts (via N- and C-terminus) with LIN28A (via C-terminus); this interaction occurs in a RNA-independent manner (PubMed:21247876). Interacts with LMX1B (PubMed:23308148). Interacts (via helicase C-terminal domain, HA2 and OB-fold regions) with MAVS (via CARD domain); this interaction occurs in both resting and double-stranded RNA poly(I:C)-induced cells (PubMed:21957149). Interacts with MBD2; this interaction stimulates transcriptional activation in a CREB-dependent manner (PubMed:12665568). Interacts (via H2A and OB-fold regions) with MYD88 (via TIR domain); this interaction is direct (PubMed:20696886). Interacts with NLRP9 upon rotavirus infection; this interaction may trigger NLRP9 inflammasome activation and inflammatory response (PubMed:28636595). Interacts (via DRBM, OB-fold and RGG regions) with NUP98 (via N-terminus); this interaction occurs in a RNA-dependent manner and stimulates DHX9-mediated ATPase activity and regulates transcription and splicing of a subset of genes (PubMed:28221134). Interacts (via N-terminus) with NXF1 (via N-terminus); this interaction is direct and negatively regulates NXF1-mediated nuclear export of constitutive transport element (CTE)-containing cellular mRNAs (PubMed:10924507). Interacts with RELA; this interaction is direct and activates NF-kappa-B-mediated transcription (PubMed:15355351). Interacts (via MTAD region) with RNA polymerase II holoenzyme; this interaction stimulates transcription activation in a CREB-dependent manner (PubMed:11149922, PubMed:11416126, PubMed:9323138). Interacts (via RGG region) with SMN1; this interaction links SMN1 to the RNA polymerase II holoenzyme (PubMed:11149922). Interacts with SP7 (PubMed:17303075). Interacts (via DRBM domains) with TARBP2 (via DRBM first and second domains); this interaction occurs in a small interfering (siRNA)-dependent manner (PubMed:17531811, PubMed:23361462). Interacts with TOP2A; this interaction occurs in a E2 enzyme UBE2I- and RNA-dependent manner, negatively regulates DHX9-mediated double-stranded DNA and RNA duplex helicase activity and stimulates TOP2A-mediated supercoiled DNA relaxation activity (PubMed:12711669). Interacts (via DRBM domains and C-terminus) with WRN (via 3'-5' exonuclease domain); this interaction inhibits the DNA-dependent NTPase and DNA helicase activities of DHX9 and stimulates the 3'-5' exonuclease activity of WRN (PubMed:15995249). Interacts with XRCC5; this interaction occurs in a RNA-dependent manner (PubMed:14704337). Interacts with ZIC2 (via C2H2-type domain 3) (PubMed:17251188). Interacts with MCM3AP isoform GANP (PubMed:23652018).</text>
</comment>
<comment type="subunit">
    <text evidence="55">(Microbial infection) Interacts with Chikungunya virus non-structural protein 3 (via C-terminus); this interaction allows the recruitment of DHX9 to the plasma membrane, where it associates with viral replication complexes and may play a role in the translation-to-replication switch.</text>
</comment>
<comment type="subunit">
    <text evidence="56">(Microbial infection) Interacts with Epstein-Barr virus (EBV) mRNA export factor ICP27 homolog/SM protein; this interaction may have an inhibitory effect on virion production.</text>
</comment>
<comment type="interaction">
    <interactant intactId="EBI-352022">
        <id>Q08211</id>
    </interactant>
    <interactant intactId="EBI-640775">
        <id>P19525</id>
        <label>EIF2AK2</label>
    </interactant>
    <organismsDiffer>false</organismsDiffer>
    <experiments>4</experiments>
</comment>
<comment type="interaction">
    <interactant intactId="EBI-352022">
        <id>Q08211</id>
    </interactant>
    <interactant intactId="EBI-299649">
        <id>P22626</id>
        <label>HNRNPA2B1</label>
    </interactant>
    <organismsDiffer>false</organismsDiffer>
    <experiments>3</experiments>
</comment>
<comment type="interaction">
    <interactant intactId="EBI-352022">
        <id>Q08211</id>
    </interactant>
    <interactant intactId="EBI-398874">
        <id>Q9UBU9</id>
        <label>NXF1</label>
    </interactant>
    <organismsDiffer>false</organismsDiffer>
    <experiments>8</experiments>
</comment>
<comment type="interaction">
    <interactant intactId="EBI-352022">
        <id>Q08211</id>
    </interactant>
    <interactant intactId="EBI-78738">
        <id>Q99873</id>
        <label>PRMT1</label>
    </interactant>
    <organismsDiffer>false</organismsDiffer>
    <experiments>3</experiments>
</comment>
<comment type="interaction">
    <interactant intactId="EBI-352022">
        <id>Q08211</id>
    </interactant>
    <interactant intactId="EBI-73886">
        <id>Q04206</id>
        <label>RELA</label>
    </interactant>
    <organismsDiffer>false</organismsDiffer>
    <experiments>4</experiments>
</comment>
<comment type="interaction">
    <interactant intactId="EBI-352022">
        <id>Q08211</id>
    </interactant>
    <interactant intactId="EBI-355867">
        <id>O14980</id>
        <label>XPO1</label>
    </interactant>
    <organismsDiffer>false</organismsDiffer>
    <experiments>3</experiments>
</comment>
<comment type="interaction">
    <interactant intactId="EBI-352022">
        <id>Q08211</id>
    </interactant>
    <interactant intactId="EBI-354065">
        <id>P67809</id>
        <label>YBX1</label>
    </interactant>
    <organismsDiffer>false</organismsDiffer>
    <experiments>11</experiments>
</comment>
<comment type="interaction">
    <interactant intactId="EBI-352022">
        <id>Q08211</id>
    </interactant>
    <interactant intactId="EBI-2548480">
        <id>Q9HA38</id>
        <label>ZMAT3</label>
    </interactant>
    <organismsDiffer>false</organismsDiffer>
    <experiments>3</experiments>
</comment>
<comment type="interaction">
    <interactant intactId="EBI-352022">
        <id>Q08211</id>
    </interactant>
    <interactant intactId="EBI-10901281">
        <id>PRO_0000038050</id>
        <dbReference type="UniProtKB" id="P19712"/>
    </interactant>
    <organismsDiffer>true</organismsDiffer>
    <experiments>6</experiments>
</comment>
<comment type="subcellular location">
    <subcellularLocation>
        <location evidence="7 8 15 27 31 58 62">Nucleus</location>
    </subcellularLocation>
    <subcellularLocation>
        <location evidence="52">Nucleus</location>
        <location evidence="52">Nucleoplasm</location>
    </subcellularLocation>
    <subcellularLocation>
        <location evidence="16">Nucleus</location>
        <location evidence="16">Nucleolus</location>
    </subcellularLocation>
    <subcellularLocation>
        <location evidence="7 8 27 30 34 38 60 62">Cytoplasm</location>
    </subcellularLocation>
    <subcellularLocation>
        <location evidence="20 32">Cytoplasm</location>
        <location evidence="20 32">Cytoskeleton</location>
        <location evidence="20 32">Microtubule organizing center</location>
        <location evidence="20 32">Centrosome</location>
    </subcellularLocation>
    <text evidence="7 8 15 27 30 31 32 52 62">Nucleoplasmic shuttling protein (PubMed:10198287, PubMed:10207077, PubMed:16375861, PubMed:9162007). Its nuclear import involves the nucleocytoplasmic transport receptor Importin alpha/Importin beta receptor pathway in a Ran-dependent manner (PubMed:16375861). In interphase, localizes in nuclear stress granules and at perichromatin fibrils and in cytoplasmic ribonucleoprotein granules (PubMed:10198287). Colocalizes with WRN and H2AX at centrosomes in a microtubule-dependent manner following DNA damaging agent treatment (PubMed:17498979). Excluded from the mitotic nucleus as early as prophase and re-entered the nucleus at telophase (PubMed:10198287). Recruited in diffuse and discrete intranuclear foci (GLFG-body) in a NUP98-dependent manner (PubMed:28221134). Colocalizes with SP7 in the nucleus (PubMed:17303075). Colocalizes with ACTB at nuclear actin filaments inside the nucleus or at the nuclear pore (PubMed:11687588). Colocalizes with HNRNPC at nuclear ribonucleoprotein complex proteins in the nucleus (PubMed:11687588). Localized in cytoplasmic mRNP granules containing untranslated mRNAs (PubMed:17289661).</text>
</comment>
<comment type="alternative products">
    <event type="alternative splicing"/>
    <isoform>
        <id>Q08211-1</id>
        <name>1</name>
        <sequence type="displayed"/>
    </isoform>
    <isoform>
        <id>Q08211-2</id>
        <name>2</name>
        <name>Leukophysin</name>
        <name>LKP</name>
        <sequence type="described" ref="VSP_042314"/>
    </isoform>
</comment>
<comment type="domain">
    <text evidence="8 12 14 49 61">DRBM domains cooperate for the binding to nucleic acid but not for unwinding helicase activity (PubMed:25062910, PubMed:9111062). The helicase-associated domain-2 (HA2) region is essential for the duplex RNA unwinding helicase activity (PubMed:25062910). The minimal transactivation region (MTAD) mediates interaction with the RNA polymerase II holoenzyme and stimulates transcriptional activation in a CREB-dependent manner (PubMed:11416126). The oligonucleotide- or oligosaccharide-binding (OB-fold) and the repeated arginine and glycine-glycine (RGG) regions are dispensable for both RNA-binding and unwinding helicase activities (PubMed:25062910). The RGG region contains both nuclear localization signal (NLS) and nuclear export signal (NES) and is necessary and sufficient for nucleocytoplasmic shuttling in a RNA-independent manner (PubMed:10207077, PubMed:11149922).</text>
</comment>
<comment type="PTM">
    <text evidence="22">Methylated (PubMed:15084609). PRMT1-mediated methylation of undefined Arg residues in the RGG region is required for nuclear import of DHX9 (PubMed:15084609).</text>
</comment>
<comment type="PTM">
    <text evidence="21 35">Phosphorylated by PRKDC; phosphorylation occurs in a RNA-dependent manner (PubMed:14704337). Phosphorylated by EIF2AK2/PKR; this phosphorylation reduces its association with double-stranded RNA (PubMed:19229320).</text>
</comment>
<comment type="disease" evidence="57 58">
    <disease id="DI-06962">
        <name>Intellectual developmental disorder, autosomal dominant 75</name>
        <acronym>MRD75</acronym>
        <description>An autosomal dominant neurodevelopmental disorder characterized by developmental delay, mild to severe impaired intellectual development, and neuropsychiatric manifestations including autism spectrum disorder, anxiety, and obsessive compulsive disorder. Disease features are highly variable and may include hypotonia, seizures, non-specific dysmorphism, poor overall growth with small head circumference, abnormal brain imaging, and heart disease.</description>
        <dbReference type="MIM" id="620988"/>
    </disease>
    <text>The disease is caused by variants affecting the gene represented in this entry.</text>
</comment>
<comment type="similarity">
    <text evidence="71">Belongs to the DEAD box helicase family. DEAH subfamily.</text>
</comment>
<comment type="online information" name="Atlas of Genetics and Cytogenetics in Oncology and Haematology">
    <link uri="https://atlasgeneticsoncology.org/gene/44879/DHX9"/>
</comment>
<gene>
    <name evidence="74" type="primary">DHX9</name>
    <name evidence="74" type="synonym">DDX9</name>
    <name type="synonym">LKP</name>
    <name type="synonym">NDH2</name>
</gene>
<dbReference type="EC" id="3.6.4.13" evidence="14 24 36 37 47 49 60"/>
<dbReference type="EMBL" id="L13848">
    <property type="protein sequence ID" value="AAB48855.1"/>
    <property type="molecule type" value="mRNA"/>
</dbReference>
<dbReference type="EMBL" id="U03643">
    <property type="protein sequence ID" value="AAA03571.1"/>
    <property type="molecule type" value="mRNA"/>
</dbReference>
<dbReference type="EMBL" id="Y10658">
    <property type="protein sequence ID" value="CAA71668.1"/>
    <property type="molecule type" value="mRNA"/>
</dbReference>
<dbReference type="EMBL" id="AB451248">
    <property type="protein sequence ID" value="BAG70062.1"/>
    <property type="molecule type" value="mRNA"/>
</dbReference>
<dbReference type="EMBL" id="AB451372">
    <property type="protein sequence ID" value="BAG70186.1"/>
    <property type="molecule type" value="mRNA"/>
</dbReference>
<dbReference type="EMBL" id="AL355999">
    <property type="status" value="NOT_ANNOTATED_CDS"/>
    <property type="molecule type" value="Genomic_DNA"/>
</dbReference>
<dbReference type="EMBL" id="AL662837">
    <property type="status" value="NOT_ANNOTATED_CDS"/>
    <property type="molecule type" value="Genomic_DNA"/>
</dbReference>
<dbReference type="EMBL" id="CH471067">
    <property type="protein sequence ID" value="EAW91138.1"/>
    <property type="molecule type" value="Genomic_DNA"/>
</dbReference>
<dbReference type="EMBL" id="BC025245">
    <property type="protein sequence ID" value="AAH25245.1"/>
    <property type="molecule type" value="mRNA"/>
</dbReference>
<dbReference type="EMBL" id="BC058896">
    <property type="protein sequence ID" value="AAH58896.1"/>
    <property type="molecule type" value="mRNA"/>
</dbReference>
<dbReference type="EMBL" id="BC107881">
    <property type="protein sequence ID" value="AAI07882.1"/>
    <property type="molecule type" value="mRNA"/>
</dbReference>
<dbReference type="EMBL" id="BC137136">
    <property type="protein sequence ID" value="AAI37137.1"/>
    <property type="molecule type" value="mRNA"/>
</dbReference>
<dbReference type="CCDS" id="CCDS41444.1">
    <molecule id="Q08211-1"/>
</dbReference>
<dbReference type="RefSeq" id="NP_001348.2">
    <molecule id="Q08211-1"/>
    <property type="nucleotide sequence ID" value="NM_001357.5"/>
</dbReference>
<dbReference type="PDB" id="3LLM">
    <property type="method" value="X-ray"/>
    <property type="resolution" value="2.80 A"/>
    <property type="chains" value="A/B=329-563"/>
</dbReference>
<dbReference type="PDB" id="3VYX">
    <property type="method" value="X-ray"/>
    <property type="resolution" value="2.29 A"/>
    <property type="chains" value="A=152-264"/>
</dbReference>
<dbReference type="PDB" id="3VYY">
    <property type="method" value="X-ray"/>
    <property type="resolution" value="2.90 A"/>
    <property type="chains" value="A/B=1-91"/>
</dbReference>
<dbReference type="PDB" id="8SZP">
    <property type="method" value="X-ray"/>
    <property type="resolution" value="2.62 A"/>
    <property type="chains" value="A/B=149-1150"/>
</dbReference>
<dbReference type="PDBsum" id="3LLM"/>
<dbReference type="PDBsum" id="3VYX"/>
<dbReference type="PDBsum" id="3VYY"/>
<dbReference type="PDBsum" id="8SZP"/>
<dbReference type="BMRB" id="Q08211"/>
<dbReference type="SMR" id="Q08211"/>
<dbReference type="BioGRID" id="108025">
    <property type="interactions" value="641"/>
</dbReference>
<dbReference type="ComplexPortal" id="CPX-1080">
    <property type="entry name" value="CRD-mediated mRNA stability complex"/>
</dbReference>
<dbReference type="CORUM" id="Q08211"/>
<dbReference type="DIP" id="DIP-31504N"/>
<dbReference type="FunCoup" id="Q08211">
    <property type="interactions" value="3371"/>
</dbReference>
<dbReference type="IntAct" id="Q08211">
    <property type="interactions" value="267"/>
</dbReference>
<dbReference type="MINT" id="Q08211"/>
<dbReference type="STRING" id="9606.ENSP00000356520"/>
<dbReference type="BindingDB" id="Q08211"/>
<dbReference type="GlyCosmos" id="Q08211">
    <property type="glycosylation" value="2 sites, 1 glycan"/>
</dbReference>
<dbReference type="GlyGen" id="Q08211">
    <property type="glycosylation" value="6 sites, 1 N-linked glycan (1 site), 1 O-linked glycan (4 sites)"/>
</dbReference>
<dbReference type="iPTMnet" id="Q08211"/>
<dbReference type="MetOSite" id="Q08211"/>
<dbReference type="PhosphoSitePlus" id="Q08211"/>
<dbReference type="SwissPalm" id="Q08211"/>
<dbReference type="BioMuta" id="DHX9"/>
<dbReference type="DMDM" id="116241330"/>
<dbReference type="CPTAC" id="CPTAC-355"/>
<dbReference type="CPTAC" id="CPTAC-356"/>
<dbReference type="jPOST" id="Q08211"/>
<dbReference type="MassIVE" id="Q08211"/>
<dbReference type="PaxDb" id="9606-ENSP00000356520"/>
<dbReference type="PeptideAtlas" id="Q08211"/>
<dbReference type="ProteomicsDB" id="58582">
    <molecule id="Q08211-1"/>
</dbReference>
<dbReference type="ProteomicsDB" id="58583">
    <molecule id="Q08211-2"/>
</dbReference>
<dbReference type="Pumba" id="Q08211"/>
<dbReference type="TopDownProteomics" id="Q08211-1">
    <molecule id="Q08211-1"/>
</dbReference>
<dbReference type="Antibodypedia" id="3194">
    <property type="antibodies" value="284 antibodies from 32 providers"/>
</dbReference>
<dbReference type="DNASU" id="1660"/>
<dbReference type="Ensembl" id="ENST00000367549.4">
    <molecule id="Q08211-1"/>
    <property type="protein sequence ID" value="ENSP00000356520.3"/>
    <property type="gene ID" value="ENSG00000135829.17"/>
</dbReference>
<dbReference type="GeneID" id="1660"/>
<dbReference type="KEGG" id="hsa:1660"/>
<dbReference type="MANE-Select" id="ENST00000367549.4">
    <property type="protein sequence ID" value="ENSP00000356520.3"/>
    <property type="RefSeq nucleotide sequence ID" value="NM_001357.5"/>
    <property type="RefSeq protein sequence ID" value="NP_001348.2"/>
</dbReference>
<dbReference type="UCSC" id="uc001gpr.4">
    <molecule id="Q08211-1"/>
    <property type="organism name" value="human"/>
</dbReference>
<dbReference type="AGR" id="HGNC:2750"/>
<dbReference type="CTD" id="1660"/>
<dbReference type="DisGeNET" id="1660"/>
<dbReference type="GeneCards" id="DHX9"/>
<dbReference type="HGNC" id="HGNC:2750">
    <property type="gene designation" value="DHX9"/>
</dbReference>
<dbReference type="HPA" id="ENSG00000135829">
    <property type="expression patterns" value="Low tissue specificity"/>
</dbReference>
<dbReference type="MalaCards" id="DHX9"/>
<dbReference type="MIM" id="603115">
    <property type="type" value="gene"/>
</dbReference>
<dbReference type="MIM" id="620988">
    <property type="type" value="phenotype"/>
</dbReference>
<dbReference type="neXtProt" id="NX_Q08211"/>
<dbReference type="OpenTargets" id="ENSG00000135829"/>
<dbReference type="PharmGKB" id="PA27232"/>
<dbReference type="VEuPathDB" id="HostDB:ENSG00000135829"/>
<dbReference type="eggNOG" id="KOG0921">
    <property type="taxonomic scope" value="Eukaryota"/>
</dbReference>
<dbReference type="GeneTree" id="ENSGT00940000155924"/>
<dbReference type="HOGENOM" id="CLU_001832_1_2_1"/>
<dbReference type="InParanoid" id="Q08211"/>
<dbReference type="OMA" id="ANWNTWH"/>
<dbReference type="OrthoDB" id="5600252at2759"/>
<dbReference type="PAN-GO" id="Q08211">
    <property type="GO annotations" value="9 GO annotations based on evolutionary models"/>
</dbReference>
<dbReference type="PhylomeDB" id="Q08211"/>
<dbReference type="TreeFam" id="TF313601"/>
<dbReference type="BRENDA" id="3.6.4.13">
    <property type="organism ID" value="2681"/>
</dbReference>
<dbReference type="PathwayCommons" id="Q08211"/>
<dbReference type="Reactome" id="R-HSA-1810476">
    <property type="pathway name" value="RIP-mediated NFkB activation via ZBP1"/>
</dbReference>
<dbReference type="Reactome" id="R-HSA-3134963">
    <property type="pathway name" value="DEx/H-box helicases activate type I IFN and inflammatory cytokines production"/>
</dbReference>
<dbReference type="Reactome" id="R-HSA-72163">
    <property type="pathway name" value="mRNA Splicing - Major Pathway"/>
</dbReference>
<dbReference type="Reactome" id="R-HSA-9833482">
    <property type="pathway name" value="PKR-mediated signaling"/>
</dbReference>
<dbReference type="SignaLink" id="Q08211"/>
<dbReference type="SIGNOR" id="Q08211"/>
<dbReference type="BioGRID-ORCS" id="1660">
    <property type="hits" value="748 hits in 1175 CRISPR screens"/>
</dbReference>
<dbReference type="CD-CODE" id="1A18FFC4">
    <property type="entry name" value="Paraspeckle"/>
</dbReference>
<dbReference type="CD-CODE" id="232F8A39">
    <property type="entry name" value="P-body"/>
</dbReference>
<dbReference type="CD-CODE" id="48DB1DAF">
    <property type="entry name" value="Synthetic Condensate 000364"/>
</dbReference>
<dbReference type="CD-CODE" id="8C2F96ED">
    <property type="entry name" value="Centrosome"/>
</dbReference>
<dbReference type="CD-CODE" id="91857CE7">
    <property type="entry name" value="Nucleolus"/>
</dbReference>
<dbReference type="CD-CODE" id="DEE660B4">
    <property type="entry name" value="Stress granule"/>
</dbReference>
<dbReference type="CD-CODE" id="F85A2E29">
    <property type="entry name" value="IMP1 RNP granule"/>
</dbReference>
<dbReference type="ChiTaRS" id="DHX9">
    <property type="organism name" value="human"/>
</dbReference>
<dbReference type="EvolutionaryTrace" id="Q08211"/>
<dbReference type="GeneWiki" id="RNA_Helicase_A"/>
<dbReference type="GenomeRNAi" id="1660"/>
<dbReference type="Pharos" id="Q08211">
    <property type="development level" value="Tbio"/>
</dbReference>
<dbReference type="PRO" id="PR:Q08211"/>
<dbReference type="Proteomes" id="UP000005640">
    <property type="component" value="Chromosome 1"/>
</dbReference>
<dbReference type="RNAct" id="Q08211">
    <property type="molecule type" value="protein"/>
</dbReference>
<dbReference type="Bgee" id="ENSG00000135829">
    <property type="expression patterns" value="Expressed in ventricular zone and 213 other cell types or tissues"/>
</dbReference>
<dbReference type="GO" id="GO:0015629">
    <property type="term" value="C:actin cytoskeleton"/>
    <property type="evidence" value="ECO:0000314"/>
    <property type="project" value="UniProtKB"/>
</dbReference>
<dbReference type="GO" id="GO:0005813">
    <property type="term" value="C:centrosome"/>
    <property type="evidence" value="ECO:0000314"/>
    <property type="project" value="UniProtKB"/>
</dbReference>
<dbReference type="GO" id="GO:0070937">
    <property type="term" value="C:CRD-mediated mRNA stability complex"/>
    <property type="evidence" value="ECO:0000314"/>
    <property type="project" value="UniProtKB"/>
</dbReference>
<dbReference type="GO" id="GO:0005737">
    <property type="term" value="C:cytoplasm"/>
    <property type="evidence" value="ECO:0000314"/>
    <property type="project" value="UniProtKB"/>
</dbReference>
<dbReference type="GO" id="GO:0036464">
    <property type="term" value="C:cytoplasmic ribonucleoprotein granule"/>
    <property type="evidence" value="ECO:0000314"/>
    <property type="project" value="UniProtKB"/>
</dbReference>
<dbReference type="GO" id="GO:0005829">
    <property type="term" value="C:cytosol"/>
    <property type="evidence" value="ECO:0000314"/>
    <property type="project" value="ComplexPortal"/>
</dbReference>
<dbReference type="GO" id="GO:0016020">
    <property type="term" value="C:membrane"/>
    <property type="evidence" value="ECO:0007005"/>
    <property type="project" value="UniProtKB"/>
</dbReference>
<dbReference type="GO" id="GO:0016604">
    <property type="term" value="C:nuclear body"/>
    <property type="evidence" value="ECO:0000314"/>
    <property type="project" value="UniProtKB"/>
</dbReference>
<dbReference type="GO" id="GO:0097165">
    <property type="term" value="C:nuclear stress granule"/>
    <property type="evidence" value="ECO:0000314"/>
    <property type="project" value="UniProtKB"/>
</dbReference>
<dbReference type="GO" id="GO:0005730">
    <property type="term" value="C:nucleolus"/>
    <property type="evidence" value="ECO:0000314"/>
    <property type="project" value="HPA"/>
</dbReference>
<dbReference type="GO" id="GO:0005654">
    <property type="term" value="C:nucleoplasm"/>
    <property type="evidence" value="ECO:0000314"/>
    <property type="project" value="HPA"/>
</dbReference>
<dbReference type="GO" id="GO:0005634">
    <property type="term" value="C:nucleus"/>
    <property type="evidence" value="ECO:0000314"/>
    <property type="project" value="UniProtKB"/>
</dbReference>
<dbReference type="GO" id="GO:0005726">
    <property type="term" value="C:perichromatin fibrils"/>
    <property type="evidence" value="ECO:0000314"/>
    <property type="project" value="UniProtKB"/>
</dbReference>
<dbReference type="GO" id="GO:0032991">
    <property type="term" value="C:protein-containing complex"/>
    <property type="evidence" value="ECO:0000314"/>
    <property type="project" value="UniProtKB"/>
</dbReference>
<dbReference type="GO" id="GO:1990904">
    <property type="term" value="C:ribonucleoprotein complex"/>
    <property type="evidence" value="ECO:0000314"/>
    <property type="project" value="UniProtKB"/>
</dbReference>
<dbReference type="GO" id="GO:0016442">
    <property type="term" value="C:RISC complex"/>
    <property type="evidence" value="ECO:0000314"/>
    <property type="project" value="UniProtKB"/>
</dbReference>
<dbReference type="GO" id="GO:0070578">
    <property type="term" value="C:RISC-loading complex"/>
    <property type="evidence" value="ECO:0000315"/>
    <property type="project" value="UniProtKB"/>
</dbReference>
<dbReference type="GO" id="GO:0043138">
    <property type="term" value="F:3'-5' DNA helicase activity"/>
    <property type="evidence" value="ECO:0000314"/>
    <property type="project" value="UniProtKB"/>
</dbReference>
<dbReference type="GO" id="GO:0033679">
    <property type="term" value="F:3'-5' DNA/RNA helicase activity"/>
    <property type="evidence" value="ECO:0000314"/>
    <property type="project" value="UniProtKB"/>
</dbReference>
<dbReference type="GO" id="GO:0034458">
    <property type="term" value="F:3'-5' RNA helicase activity"/>
    <property type="evidence" value="ECO:0000314"/>
    <property type="project" value="UniProtKB"/>
</dbReference>
<dbReference type="GO" id="GO:0005524">
    <property type="term" value="F:ATP binding"/>
    <property type="evidence" value="ECO:0000314"/>
    <property type="project" value="UniProtKB"/>
</dbReference>
<dbReference type="GO" id="GO:0016887">
    <property type="term" value="F:ATP hydrolysis activity"/>
    <property type="evidence" value="ECO:0000315"/>
    <property type="project" value="UniProtKB"/>
</dbReference>
<dbReference type="GO" id="GO:0140640">
    <property type="term" value="F:catalytic activity, acting on a nucleic acid"/>
    <property type="evidence" value="ECO:0000314"/>
    <property type="project" value="UniProtKB"/>
</dbReference>
<dbReference type="GO" id="GO:0031490">
    <property type="term" value="F:chromatin DNA binding"/>
    <property type="evidence" value="ECO:0000314"/>
    <property type="project" value="UniProtKB"/>
</dbReference>
<dbReference type="GO" id="GO:0003677">
    <property type="term" value="F:DNA binding"/>
    <property type="evidence" value="ECO:0000250"/>
    <property type="project" value="UniProtKB"/>
</dbReference>
<dbReference type="GO" id="GO:0003678">
    <property type="term" value="F:DNA helicase activity"/>
    <property type="evidence" value="ECO:0000315"/>
    <property type="project" value="UniProtKB"/>
</dbReference>
<dbReference type="GO" id="GO:0003688">
    <property type="term" value="F:DNA replication origin binding"/>
    <property type="evidence" value="ECO:0000314"/>
    <property type="project" value="UniProtKB"/>
</dbReference>
<dbReference type="GO" id="GO:0003690">
    <property type="term" value="F:double-stranded DNA binding"/>
    <property type="evidence" value="ECO:0000314"/>
    <property type="project" value="UniProtKB"/>
</dbReference>
<dbReference type="GO" id="GO:0003725">
    <property type="term" value="F:double-stranded RNA binding"/>
    <property type="evidence" value="ECO:0000314"/>
    <property type="project" value="UniProtKB"/>
</dbReference>
<dbReference type="GO" id="GO:0061676">
    <property type="term" value="F:importin-alpha family protein binding"/>
    <property type="evidence" value="ECO:0000314"/>
    <property type="project" value="UniProtKB"/>
</dbReference>
<dbReference type="GO" id="GO:0046872">
    <property type="term" value="F:metal ion binding"/>
    <property type="evidence" value="ECO:0007669"/>
    <property type="project" value="UniProtKB-KW"/>
</dbReference>
<dbReference type="GO" id="GO:0003729">
    <property type="term" value="F:mRNA binding"/>
    <property type="evidence" value="ECO:0000314"/>
    <property type="project" value="UniProtKB"/>
</dbReference>
<dbReference type="GO" id="GO:0047429">
    <property type="term" value="F:nucleoside triphosphate diphosphatase activity"/>
    <property type="evidence" value="ECO:0000314"/>
    <property type="project" value="UniProtKB"/>
</dbReference>
<dbReference type="GO" id="GO:1990841">
    <property type="term" value="F:promoter-specific chromatin binding"/>
    <property type="evidence" value="ECO:0000315"/>
    <property type="project" value="UniProtKB"/>
</dbReference>
<dbReference type="GO" id="GO:0001069">
    <property type="term" value="F:regulatory region RNA binding"/>
    <property type="evidence" value="ECO:0000314"/>
    <property type="project" value="UniProtKB"/>
</dbReference>
<dbReference type="GO" id="GO:0017111">
    <property type="term" value="F:ribonucleoside triphosphate phosphatase activity"/>
    <property type="evidence" value="ECO:0000250"/>
    <property type="project" value="UniProtKB"/>
</dbReference>
<dbReference type="GO" id="GO:0043022">
    <property type="term" value="F:ribosome binding"/>
    <property type="evidence" value="ECO:0000314"/>
    <property type="project" value="UniProtKB"/>
</dbReference>
<dbReference type="GO" id="GO:1905172">
    <property type="term" value="F:RISC complex binding"/>
    <property type="evidence" value="ECO:0000314"/>
    <property type="project" value="UniProtKB"/>
</dbReference>
<dbReference type="GO" id="GO:0003723">
    <property type="term" value="F:RNA binding"/>
    <property type="evidence" value="ECO:0000314"/>
    <property type="project" value="UniProtKB"/>
</dbReference>
<dbReference type="GO" id="GO:0003724">
    <property type="term" value="F:RNA helicase activity"/>
    <property type="evidence" value="ECO:0000314"/>
    <property type="project" value="UniProtKB"/>
</dbReference>
<dbReference type="GO" id="GO:0070063">
    <property type="term" value="F:RNA polymerase binding"/>
    <property type="evidence" value="ECO:0000314"/>
    <property type="project" value="UniProtKB"/>
</dbReference>
<dbReference type="GO" id="GO:0000978">
    <property type="term" value="F:RNA polymerase II cis-regulatory region sequence-specific DNA binding"/>
    <property type="evidence" value="ECO:0000314"/>
    <property type="project" value="UniProtKB"/>
</dbReference>
<dbReference type="GO" id="GO:0000993">
    <property type="term" value="F:RNA polymerase II complex binding"/>
    <property type="evidence" value="ECO:0000314"/>
    <property type="project" value="UniProtKB"/>
</dbReference>
<dbReference type="GO" id="GO:0061629">
    <property type="term" value="F:RNA polymerase II-specific DNA-binding transcription factor binding"/>
    <property type="evidence" value="ECO:0000353"/>
    <property type="project" value="BHF-UCL"/>
</dbReference>
<dbReference type="GO" id="GO:0035613">
    <property type="term" value="F:RNA stem-loop binding"/>
    <property type="evidence" value="ECO:0000314"/>
    <property type="project" value="UniProtKB"/>
</dbReference>
<dbReference type="GO" id="GO:1990825">
    <property type="term" value="F:sequence-specific mRNA binding"/>
    <property type="evidence" value="ECO:0000314"/>
    <property type="project" value="UniProtKB"/>
</dbReference>
<dbReference type="GO" id="GO:1990518">
    <property type="term" value="F:single-stranded 3'-5' DNA helicase activity"/>
    <property type="evidence" value="ECO:0000314"/>
    <property type="project" value="UniProtKB"/>
</dbReference>
<dbReference type="GO" id="GO:0003697">
    <property type="term" value="F:single-stranded DNA binding"/>
    <property type="evidence" value="ECO:0000314"/>
    <property type="project" value="UniProtKB"/>
</dbReference>
<dbReference type="GO" id="GO:0003727">
    <property type="term" value="F:single-stranded RNA binding"/>
    <property type="evidence" value="ECO:0000314"/>
    <property type="project" value="UniProtKB"/>
</dbReference>
<dbReference type="GO" id="GO:0035197">
    <property type="term" value="F:siRNA binding"/>
    <property type="evidence" value="ECO:0000314"/>
    <property type="project" value="UniProtKB"/>
</dbReference>
<dbReference type="GO" id="GO:0003713">
    <property type="term" value="F:transcription coactivator activity"/>
    <property type="evidence" value="ECO:0000315"/>
    <property type="project" value="UniProtKB"/>
</dbReference>
<dbReference type="GO" id="GO:0003712">
    <property type="term" value="F:transcription coregulator activity"/>
    <property type="evidence" value="ECO:0000315"/>
    <property type="project" value="UniProtKB"/>
</dbReference>
<dbReference type="GO" id="GO:0045142">
    <property type="term" value="F:triplex DNA binding"/>
    <property type="evidence" value="ECO:0000314"/>
    <property type="project" value="UniProtKB"/>
</dbReference>
<dbReference type="GO" id="GO:0000380">
    <property type="term" value="P:alternative mRNA splicing, via spliceosome"/>
    <property type="evidence" value="ECO:0000315"/>
    <property type="project" value="UniProtKB"/>
</dbReference>
<dbReference type="GO" id="GO:0071360">
    <property type="term" value="P:cellular response to exogenous dsRNA"/>
    <property type="evidence" value="ECO:0000315"/>
    <property type="project" value="UniProtKB"/>
</dbReference>
<dbReference type="GO" id="GO:0006325">
    <property type="term" value="P:chromatin organization"/>
    <property type="evidence" value="ECO:0000315"/>
    <property type="project" value="UniProtKB"/>
</dbReference>
<dbReference type="GO" id="GO:0070934">
    <property type="term" value="P:CRD-mediated mRNA stabilization"/>
    <property type="evidence" value="ECO:0000314"/>
    <property type="project" value="ComplexPortal"/>
</dbReference>
<dbReference type="GO" id="GO:0006260">
    <property type="term" value="P:DNA replication"/>
    <property type="evidence" value="ECO:0007669"/>
    <property type="project" value="UniProtKB-KW"/>
</dbReference>
<dbReference type="GO" id="GO:0006353">
    <property type="term" value="P:DNA-templated transcription termination"/>
    <property type="evidence" value="ECO:0007669"/>
    <property type="project" value="UniProtKB-KW"/>
</dbReference>
<dbReference type="GO" id="GO:0039695">
    <property type="term" value="P:DNA-templated viral transcription"/>
    <property type="evidence" value="ECO:0000314"/>
    <property type="project" value="UniProtKB"/>
</dbReference>
<dbReference type="GO" id="GO:0045087">
    <property type="term" value="P:innate immune response"/>
    <property type="evidence" value="ECO:0007669"/>
    <property type="project" value="UniProtKB-KW"/>
</dbReference>
<dbReference type="GO" id="GO:0035195">
    <property type="term" value="P:miRNA-mediated post-transcriptional gene silencing"/>
    <property type="evidence" value="ECO:0000315"/>
    <property type="project" value="UniProtKB"/>
</dbReference>
<dbReference type="GO" id="GO:0051028">
    <property type="term" value="P:mRNA transport"/>
    <property type="evidence" value="ECO:0007669"/>
    <property type="project" value="UniProtKB-KW"/>
</dbReference>
<dbReference type="GO" id="GO:1900152">
    <property type="term" value="P:negative regulation of nuclear-transcribed mRNA catabolic process, deadenylation-dependent decay"/>
    <property type="evidence" value="ECO:0000314"/>
    <property type="project" value="ComplexPortal"/>
</dbReference>
<dbReference type="GO" id="GO:0001649">
    <property type="term" value="P:osteoblast differentiation"/>
    <property type="evidence" value="ECO:0007005"/>
    <property type="project" value="UniProtKB"/>
</dbReference>
<dbReference type="GO" id="GO:2000767">
    <property type="term" value="P:positive regulation of cytoplasmic translation"/>
    <property type="evidence" value="ECO:0000314"/>
    <property type="project" value="ComplexPortal"/>
</dbReference>
<dbReference type="GO" id="GO:0045739">
    <property type="term" value="P:positive regulation of DNA repair"/>
    <property type="evidence" value="ECO:0000315"/>
    <property type="project" value="UniProtKB"/>
</dbReference>
<dbReference type="GO" id="GO:0045740">
    <property type="term" value="P:positive regulation of DNA replication"/>
    <property type="evidence" value="ECO:0000315"/>
    <property type="project" value="UniProtKB"/>
</dbReference>
<dbReference type="GO" id="GO:0048146">
    <property type="term" value="P:positive regulation of fibroblast proliferation"/>
    <property type="evidence" value="ECO:0000315"/>
    <property type="project" value="UniProtKB"/>
</dbReference>
<dbReference type="GO" id="GO:0050729">
    <property type="term" value="P:positive regulation of inflammatory response"/>
    <property type="evidence" value="ECO:0000250"/>
    <property type="project" value="UniProtKB"/>
</dbReference>
<dbReference type="GO" id="GO:0045089">
    <property type="term" value="P:positive regulation of innate immune response"/>
    <property type="evidence" value="ECO:0000250"/>
    <property type="project" value="UniProtKB"/>
</dbReference>
<dbReference type="GO" id="GO:0032727">
    <property type="term" value="P:positive regulation of interferon-alpha production"/>
    <property type="evidence" value="ECO:0000315"/>
    <property type="project" value="UniProtKB"/>
</dbReference>
<dbReference type="GO" id="GO:0032728">
    <property type="term" value="P:positive regulation of interferon-beta production"/>
    <property type="evidence" value="ECO:0000315"/>
    <property type="project" value="UniProtKB"/>
</dbReference>
<dbReference type="GO" id="GO:0032741">
    <property type="term" value="P:positive regulation of interleukin-18 production"/>
    <property type="evidence" value="ECO:0000250"/>
    <property type="project" value="UniProtKB"/>
</dbReference>
<dbReference type="GO" id="GO:0032755">
    <property type="term" value="P:positive regulation of interleukin-6 production"/>
    <property type="evidence" value="ECO:0000315"/>
    <property type="project" value="UniProtKB"/>
</dbReference>
<dbReference type="GO" id="GO:0051092">
    <property type="term" value="P:positive regulation of NF-kappaB transcription factor activity"/>
    <property type="evidence" value="ECO:0000315"/>
    <property type="project" value="UniProtKB"/>
</dbReference>
<dbReference type="GO" id="GO:0060760">
    <property type="term" value="P:positive regulation of response to cytokine stimulus"/>
    <property type="evidence" value="ECO:0000315"/>
    <property type="project" value="UniProtKB"/>
</dbReference>
<dbReference type="GO" id="GO:0046833">
    <property type="term" value="P:positive regulation of RNA export from nucleus"/>
    <property type="evidence" value="ECO:0000314"/>
    <property type="project" value="UniProtKB"/>
</dbReference>
<dbReference type="GO" id="GO:0045944">
    <property type="term" value="P:positive regulation of transcription by RNA polymerase II"/>
    <property type="evidence" value="ECO:0000315"/>
    <property type="project" value="UniProtKB"/>
</dbReference>
<dbReference type="GO" id="GO:0032760">
    <property type="term" value="P:positive regulation of tumor necrosis factor production"/>
    <property type="evidence" value="ECO:0000315"/>
    <property type="project" value="UniProtKB"/>
</dbReference>
<dbReference type="GO" id="GO:0050434">
    <property type="term" value="P:positive regulation of viral transcription"/>
    <property type="evidence" value="ECO:0000314"/>
    <property type="project" value="UniProtKB"/>
</dbReference>
<dbReference type="GO" id="GO:1903608">
    <property type="term" value="P:protein localization to cytoplasmic stress granule"/>
    <property type="evidence" value="ECO:0000315"/>
    <property type="project" value="AgBase"/>
</dbReference>
<dbReference type="GO" id="GO:0065003">
    <property type="term" value="P:protein-containing complex assembly"/>
    <property type="evidence" value="ECO:0000314"/>
    <property type="project" value="GO_Central"/>
</dbReference>
<dbReference type="GO" id="GO:0070269">
    <property type="term" value="P:pyroptotic inflammatory response"/>
    <property type="evidence" value="ECO:0000250"/>
    <property type="project" value="UniProtKB"/>
</dbReference>
<dbReference type="GO" id="GO:2000765">
    <property type="term" value="P:regulation of cytoplasmic translation"/>
    <property type="evidence" value="ECO:0000314"/>
    <property type="project" value="UniProtKB"/>
</dbReference>
<dbReference type="GO" id="GO:0050691">
    <property type="term" value="P:regulation of defense response to virus by host"/>
    <property type="evidence" value="ECO:0000250"/>
    <property type="project" value="UniProtKB"/>
</dbReference>
<dbReference type="GO" id="GO:0050684">
    <property type="term" value="P:regulation of mRNA processing"/>
    <property type="evidence" value="ECO:0000314"/>
    <property type="project" value="UniProtKB"/>
</dbReference>
<dbReference type="GO" id="GO:0006357">
    <property type="term" value="P:regulation of transcription by RNA polymerase II"/>
    <property type="evidence" value="ECO:0000315"/>
    <property type="project" value="UniProtKB"/>
</dbReference>
<dbReference type="GO" id="GO:0048511">
    <property type="term" value="P:rhythmic process"/>
    <property type="evidence" value="ECO:0007669"/>
    <property type="project" value="UniProtKB-KW"/>
</dbReference>
<dbReference type="GO" id="GO:0070922">
    <property type="term" value="P:RISC complex assembly"/>
    <property type="evidence" value="ECO:0000315"/>
    <property type="project" value="UniProtKB"/>
</dbReference>
<dbReference type="CDD" id="cd17972">
    <property type="entry name" value="DEXHc_DHX9"/>
    <property type="match status" value="1"/>
</dbReference>
<dbReference type="CDD" id="cd19854">
    <property type="entry name" value="DSRM_DHX9_rpt1"/>
    <property type="match status" value="1"/>
</dbReference>
<dbReference type="CDD" id="cd19855">
    <property type="entry name" value="DSRM_DHX9_rpt2"/>
    <property type="match status" value="1"/>
</dbReference>
<dbReference type="CDD" id="cd18791">
    <property type="entry name" value="SF2_C_RHA"/>
    <property type="match status" value="1"/>
</dbReference>
<dbReference type="FunFam" id="3.30.160.20:FF:000026">
    <property type="entry name" value="ATP-dependent RNA helicase A"/>
    <property type="match status" value="1"/>
</dbReference>
<dbReference type="FunFam" id="3.30.160.20:FF:000028">
    <property type="entry name" value="ATP-dependent RNA helicase A"/>
    <property type="match status" value="1"/>
</dbReference>
<dbReference type="FunFam" id="3.40.50.300:FF:000677">
    <property type="entry name" value="ATP-dependent RNA helicase A"/>
    <property type="match status" value="1"/>
</dbReference>
<dbReference type="FunFam" id="1.20.120.1080:FF:000006">
    <property type="entry name" value="ATP-dependent RNA helicase A protein"/>
    <property type="match status" value="1"/>
</dbReference>
<dbReference type="FunFam" id="3.40.50.300:FF:000284">
    <property type="entry name" value="probable ATP-dependent RNA helicase YTHDC2"/>
    <property type="match status" value="1"/>
</dbReference>
<dbReference type="Gene3D" id="1.20.120.1080">
    <property type="match status" value="1"/>
</dbReference>
<dbReference type="Gene3D" id="3.30.160.20">
    <property type="match status" value="2"/>
</dbReference>
<dbReference type="Gene3D" id="3.40.50.300">
    <property type="entry name" value="P-loop containing nucleotide triphosphate hydrolases"/>
    <property type="match status" value="2"/>
</dbReference>
<dbReference type="InterPro" id="IPR011709">
    <property type="entry name" value="DEAD-box_helicase_OB_fold"/>
</dbReference>
<dbReference type="InterPro" id="IPR011545">
    <property type="entry name" value="DEAD/DEAH_box_helicase_dom"/>
</dbReference>
<dbReference type="InterPro" id="IPR044447">
    <property type="entry name" value="DHX9_DEXHc"/>
</dbReference>
<dbReference type="InterPro" id="IPR044445">
    <property type="entry name" value="DHX9_DSRM_1"/>
</dbReference>
<dbReference type="InterPro" id="IPR044446">
    <property type="entry name" value="DHX9_DSRM_2"/>
</dbReference>
<dbReference type="InterPro" id="IPR002464">
    <property type="entry name" value="DNA/RNA_helicase_DEAH_CS"/>
</dbReference>
<dbReference type="InterPro" id="IPR014720">
    <property type="entry name" value="dsRBD_dom"/>
</dbReference>
<dbReference type="InterPro" id="IPR048333">
    <property type="entry name" value="HA2_WH"/>
</dbReference>
<dbReference type="InterPro" id="IPR007502">
    <property type="entry name" value="Helicase-assoc_dom"/>
</dbReference>
<dbReference type="InterPro" id="IPR014001">
    <property type="entry name" value="Helicase_ATP-bd"/>
</dbReference>
<dbReference type="InterPro" id="IPR001650">
    <property type="entry name" value="Helicase_C-like"/>
</dbReference>
<dbReference type="InterPro" id="IPR027417">
    <property type="entry name" value="P-loop_NTPase"/>
</dbReference>
<dbReference type="PANTHER" id="PTHR18934">
    <property type="entry name" value="ATP-DEPENDENT RNA HELICASE"/>
    <property type="match status" value="1"/>
</dbReference>
<dbReference type="PANTHER" id="PTHR18934:SF119">
    <property type="entry name" value="ATP-DEPENDENT RNA HELICASE A"/>
    <property type="match status" value="1"/>
</dbReference>
<dbReference type="Pfam" id="PF00270">
    <property type="entry name" value="DEAD"/>
    <property type="match status" value="1"/>
</dbReference>
<dbReference type="Pfam" id="PF00035">
    <property type="entry name" value="dsrm"/>
    <property type="match status" value="2"/>
</dbReference>
<dbReference type="Pfam" id="PF21010">
    <property type="entry name" value="HA2_C"/>
    <property type="match status" value="1"/>
</dbReference>
<dbReference type="Pfam" id="PF04408">
    <property type="entry name" value="HA2_N"/>
    <property type="match status" value="1"/>
</dbReference>
<dbReference type="Pfam" id="PF00271">
    <property type="entry name" value="Helicase_C"/>
    <property type="match status" value="1"/>
</dbReference>
<dbReference type="Pfam" id="PF07717">
    <property type="entry name" value="OB_NTP_bind"/>
    <property type="match status" value="1"/>
</dbReference>
<dbReference type="SMART" id="SM00487">
    <property type="entry name" value="DEXDc"/>
    <property type="match status" value="1"/>
</dbReference>
<dbReference type="SMART" id="SM00358">
    <property type="entry name" value="DSRM"/>
    <property type="match status" value="2"/>
</dbReference>
<dbReference type="SMART" id="SM00847">
    <property type="entry name" value="HA2"/>
    <property type="match status" value="1"/>
</dbReference>
<dbReference type="SMART" id="SM00490">
    <property type="entry name" value="HELICc"/>
    <property type="match status" value="1"/>
</dbReference>
<dbReference type="SUPFAM" id="SSF54768">
    <property type="entry name" value="dsRNA-binding domain-like"/>
    <property type="match status" value="2"/>
</dbReference>
<dbReference type="SUPFAM" id="SSF52540">
    <property type="entry name" value="P-loop containing nucleoside triphosphate hydrolases"/>
    <property type="match status" value="1"/>
</dbReference>
<dbReference type="PROSITE" id="PS00690">
    <property type="entry name" value="DEAH_ATP_HELICASE"/>
    <property type="match status" value="1"/>
</dbReference>
<dbReference type="PROSITE" id="PS50137">
    <property type="entry name" value="DS_RBD"/>
    <property type="match status" value="2"/>
</dbReference>
<dbReference type="PROSITE" id="PS51192">
    <property type="entry name" value="HELICASE_ATP_BIND_1"/>
    <property type="match status" value="1"/>
</dbReference>
<dbReference type="PROSITE" id="PS51194">
    <property type="entry name" value="HELICASE_CTER"/>
    <property type="match status" value="1"/>
</dbReference>
<proteinExistence type="evidence at protein level"/>
<protein>
    <recommendedName>
        <fullName evidence="71">ATP-dependent RNA helicase A</fullName>
        <ecNumber evidence="14 24 36 37 47 49 60">3.6.4.13</ecNumber>
    </recommendedName>
    <alternativeName>
        <fullName>DEAH box protein 9</fullName>
    </alternativeName>
    <alternativeName>
        <fullName evidence="74">DExH-box helicase 9</fullName>
    </alternativeName>
    <alternativeName>
        <fullName evidence="69">Leukophysin</fullName>
        <shortName evidence="69">LKP</shortName>
    </alternativeName>
    <alternativeName>
        <fullName evidence="66 68 70">Nuclear DNA helicase II</fullName>
        <shortName evidence="68 70">NDH II</shortName>
    </alternativeName>
    <alternativeName>
        <fullName evidence="70">RNA helicase A</fullName>
    </alternativeName>
</protein>
<accession>Q08211</accession>
<accession>B2RNV4</accession>
<accession>Q05CI5</accession>
<accession>Q12803</accession>
<accession>Q32Q22</accession>
<accession>Q5VY62</accession>
<accession>Q6PD69</accession>
<accession>Q99556</accession>
<reference key="1">
    <citation type="journal article" date="1993" name="J. Biol. Chem.">
        <title>Human RNA helicase A is homologous to the maleless protein of Drosophila.</title>
        <authorList>
            <person name="Lee C.-G."/>
            <person name="Hurwitz J."/>
        </authorList>
    </citation>
    <scope>NUCLEOTIDE SEQUENCE [MRNA] (ISOFORM 1)</scope>
    <scope>PARTIAL PROTEIN SEQUENCE</scope>
    <scope>VARIANT VAL-894</scope>
</reference>
<reference key="2">
    <citation type="journal article" date="1996" name="J. Immunol.">
        <title>Leukophysin: an RNA helicase A-related molecule identified in cytotoxic T cell granules and vesicles.</title>
        <authorList>
            <person name="Abdelhaleem M.M."/>
            <person name="Hameed S."/>
            <person name="Klassen D."/>
            <person name="Greenberg A.H."/>
        </authorList>
    </citation>
    <scope>NUCLEOTIDE SEQUENCE [MRNA] (ISOFORM 2)</scope>
    <scope>SUBCELLULAR LOCATION</scope>
</reference>
<reference key="3">
    <citation type="journal article" date="1997" name="J. Biol. Chem.">
        <title>Domain structure of human nuclear DNA helicase II (RNA helicase A).</title>
        <authorList>
            <person name="Zhang S."/>
            <person name="Grosse F."/>
        </authorList>
    </citation>
    <scope>NUCLEOTIDE SEQUENCE [MRNA] (ISOFORM 1)</scope>
    <scope>FUNCTION IN DNA/RNA UNWINDING</scope>
    <scope>CATALYTIC ACTIVITY</scope>
    <scope>DNA-BINDING</scope>
    <scope>RNA-BINDING</scope>
    <scope>DOMAIN DRBM</scope>
</reference>
<reference key="4">
    <citation type="journal article" date="2008" name="Nat. Methods">
        <title>Human protein factory for converting the transcriptome into an in vitro-expressed proteome.</title>
        <authorList>
            <person name="Goshima N."/>
            <person name="Kawamura Y."/>
            <person name="Fukumoto A."/>
            <person name="Miura A."/>
            <person name="Honma R."/>
            <person name="Satoh R."/>
            <person name="Wakamatsu A."/>
            <person name="Yamamoto J."/>
            <person name="Kimura K."/>
            <person name="Nishikawa T."/>
            <person name="Andoh T."/>
            <person name="Iida Y."/>
            <person name="Ishikawa K."/>
            <person name="Ito E."/>
            <person name="Kagawa N."/>
            <person name="Kaminaga C."/>
            <person name="Kanehori K."/>
            <person name="Kawakami B."/>
            <person name="Kenmochi K."/>
            <person name="Kimura R."/>
            <person name="Kobayashi M."/>
            <person name="Kuroita T."/>
            <person name="Kuwayama H."/>
            <person name="Maruyama Y."/>
            <person name="Matsuo K."/>
            <person name="Minami K."/>
            <person name="Mitsubori M."/>
            <person name="Mori M."/>
            <person name="Morishita R."/>
            <person name="Murase A."/>
            <person name="Nishikawa A."/>
            <person name="Nishikawa S."/>
            <person name="Okamoto T."/>
            <person name="Sakagami N."/>
            <person name="Sakamoto Y."/>
            <person name="Sasaki Y."/>
            <person name="Seki T."/>
            <person name="Sono S."/>
            <person name="Sugiyama A."/>
            <person name="Sumiya T."/>
            <person name="Takayama T."/>
            <person name="Takayama Y."/>
            <person name="Takeda H."/>
            <person name="Togashi T."/>
            <person name="Yahata K."/>
            <person name="Yamada H."/>
            <person name="Yanagisawa Y."/>
            <person name="Endo Y."/>
            <person name="Imamoto F."/>
            <person name="Kisu Y."/>
            <person name="Tanaka S."/>
            <person name="Isogai T."/>
            <person name="Imai J."/>
            <person name="Watanabe S."/>
            <person name="Nomura N."/>
        </authorList>
    </citation>
    <scope>NUCLEOTIDE SEQUENCE [LARGE SCALE MRNA] (ISOFORM 2)</scope>
</reference>
<reference key="5">
    <citation type="journal article" date="2006" name="Nature">
        <title>The DNA sequence and biological annotation of human chromosome 1.</title>
        <authorList>
            <person name="Gregory S.G."/>
            <person name="Barlow K.F."/>
            <person name="McLay K.E."/>
            <person name="Kaul R."/>
            <person name="Swarbreck D."/>
            <person name="Dunham A."/>
            <person name="Scott C.E."/>
            <person name="Howe K.L."/>
            <person name="Woodfine K."/>
            <person name="Spencer C.C.A."/>
            <person name="Jones M.C."/>
            <person name="Gillson C."/>
            <person name="Searle S."/>
            <person name="Zhou Y."/>
            <person name="Kokocinski F."/>
            <person name="McDonald L."/>
            <person name="Evans R."/>
            <person name="Phillips K."/>
            <person name="Atkinson A."/>
            <person name="Cooper R."/>
            <person name="Jones C."/>
            <person name="Hall R.E."/>
            <person name="Andrews T.D."/>
            <person name="Lloyd C."/>
            <person name="Ainscough R."/>
            <person name="Almeida J.P."/>
            <person name="Ambrose K.D."/>
            <person name="Anderson F."/>
            <person name="Andrew R.W."/>
            <person name="Ashwell R.I.S."/>
            <person name="Aubin K."/>
            <person name="Babbage A.K."/>
            <person name="Bagguley C.L."/>
            <person name="Bailey J."/>
            <person name="Beasley H."/>
            <person name="Bethel G."/>
            <person name="Bird C.P."/>
            <person name="Bray-Allen S."/>
            <person name="Brown J.Y."/>
            <person name="Brown A.J."/>
            <person name="Buckley D."/>
            <person name="Burton J."/>
            <person name="Bye J."/>
            <person name="Carder C."/>
            <person name="Chapman J.C."/>
            <person name="Clark S.Y."/>
            <person name="Clarke G."/>
            <person name="Clee C."/>
            <person name="Cobley V."/>
            <person name="Collier R.E."/>
            <person name="Corby N."/>
            <person name="Coville G.J."/>
            <person name="Davies J."/>
            <person name="Deadman R."/>
            <person name="Dunn M."/>
            <person name="Earthrowl M."/>
            <person name="Ellington A.G."/>
            <person name="Errington H."/>
            <person name="Frankish A."/>
            <person name="Frankland J."/>
            <person name="French L."/>
            <person name="Garner P."/>
            <person name="Garnett J."/>
            <person name="Gay L."/>
            <person name="Ghori M.R.J."/>
            <person name="Gibson R."/>
            <person name="Gilby L.M."/>
            <person name="Gillett W."/>
            <person name="Glithero R.J."/>
            <person name="Grafham D.V."/>
            <person name="Griffiths C."/>
            <person name="Griffiths-Jones S."/>
            <person name="Grocock R."/>
            <person name="Hammond S."/>
            <person name="Harrison E.S.I."/>
            <person name="Hart E."/>
            <person name="Haugen E."/>
            <person name="Heath P.D."/>
            <person name="Holmes S."/>
            <person name="Holt K."/>
            <person name="Howden P.J."/>
            <person name="Hunt A.R."/>
            <person name="Hunt S.E."/>
            <person name="Hunter G."/>
            <person name="Isherwood J."/>
            <person name="James R."/>
            <person name="Johnson C."/>
            <person name="Johnson D."/>
            <person name="Joy A."/>
            <person name="Kay M."/>
            <person name="Kershaw J.K."/>
            <person name="Kibukawa M."/>
            <person name="Kimberley A.M."/>
            <person name="King A."/>
            <person name="Knights A.J."/>
            <person name="Lad H."/>
            <person name="Laird G."/>
            <person name="Lawlor S."/>
            <person name="Leongamornlert D.A."/>
            <person name="Lloyd D.M."/>
            <person name="Loveland J."/>
            <person name="Lovell J."/>
            <person name="Lush M.J."/>
            <person name="Lyne R."/>
            <person name="Martin S."/>
            <person name="Mashreghi-Mohammadi M."/>
            <person name="Matthews L."/>
            <person name="Matthews N.S.W."/>
            <person name="McLaren S."/>
            <person name="Milne S."/>
            <person name="Mistry S."/>
            <person name="Moore M.J.F."/>
            <person name="Nickerson T."/>
            <person name="O'Dell C.N."/>
            <person name="Oliver K."/>
            <person name="Palmeiri A."/>
            <person name="Palmer S.A."/>
            <person name="Parker A."/>
            <person name="Patel D."/>
            <person name="Pearce A.V."/>
            <person name="Peck A.I."/>
            <person name="Pelan S."/>
            <person name="Phelps K."/>
            <person name="Phillimore B.J."/>
            <person name="Plumb R."/>
            <person name="Rajan J."/>
            <person name="Raymond C."/>
            <person name="Rouse G."/>
            <person name="Saenphimmachak C."/>
            <person name="Sehra H.K."/>
            <person name="Sheridan E."/>
            <person name="Shownkeen R."/>
            <person name="Sims S."/>
            <person name="Skuce C.D."/>
            <person name="Smith M."/>
            <person name="Steward C."/>
            <person name="Subramanian S."/>
            <person name="Sycamore N."/>
            <person name="Tracey A."/>
            <person name="Tromans A."/>
            <person name="Van Helmond Z."/>
            <person name="Wall M."/>
            <person name="Wallis J.M."/>
            <person name="White S."/>
            <person name="Whitehead S.L."/>
            <person name="Wilkinson J.E."/>
            <person name="Willey D.L."/>
            <person name="Williams H."/>
            <person name="Wilming L."/>
            <person name="Wray P.W."/>
            <person name="Wu Z."/>
            <person name="Coulson A."/>
            <person name="Vaudin M."/>
            <person name="Sulston J.E."/>
            <person name="Durbin R.M."/>
            <person name="Hubbard T."/>
            <person name="Wooster R."/>
            <person name="Dunham I."/>
            <person name="Carter N.P."/>
            <person name="McVean G."/>
            <person name="Ross M.T."/>
            <person name="Harrow J."/>
            <person name="Olson M.V."/>
            <person name="Beck S."/>
            <person name="Rogers J."/>
            <person name="Bentley D.R."/>
        </authorList>
    </citation>
    <scope>NUCLEOTIDE SEQUENCE [LARGE SCALE GENOMIC DNA]</scope>
</reference>
<reference key="6">
    <citation type="submission" date="2005-07" db="EMBL/GenBank/DDBJ databases">
        <authorList>
            <person name="Mural R.J."/>
            <person name="Istrail S."/>
            <person name="Sutton G.G."/>
            <person name="Florea L."/>
            <person name="Halpern A.L."/>
            <person name="Mobarry C.M."/>
            <person name="Lippert R."/>
            <person name="Walenz B."/>
            <person name="Shatkay H."/>
            <person name="Dew I."/>
            <person name="Miller J.R."/>
            <person name="Flanigan M.J."/>
            <person name="Edwards N.J."/>
            <person name="Bolanos R."/>
            <person name="Fasulo D."/>
            <person name="Halldorsson B.V."/>
            <person name="Hannenhalli S."/>
            <person name="Turner R."/>
            <person name="Yooseph S."/>
            <person name="Lu F."/>
            <person name="Nusskern D.R."/>
            <person name="Shue B.C."/>
            <person name="Zheng X.H."/>
            <person name="Zhong F."/>
            <person name="Delcher A.L."/>
            <person name="Huson D.H."/>
            <person name="Kravitz S.A."/>
            <person name="Mouchard L."/>
            <person name="Reinert K."/>
            <person name="Remington K.A."/>
            <person name="Clark A.G."/>
            <person name="Waterman M.S."/>
            <person name="Eichler E.E."/>
            <person name="Adams M.D."/>
            <person name="Hunkapiller M.W."/>
            <person name="Myers E.W."/>
            <person name="Venter J.C."/>
        </authorList>
    </citation>
    <scope>NUCLEOTIDE SEQUENCE [LARGE SCALE GENOMIC DNA]</scope>
</reference>
<reference key="7">
    <citation type="journal article" date="2004" name="Genome Res.">
        <title>The status, quality, and expansion of the NIH full-length cDNA project: the Mammalian Gene Collection (MGC).</title>
        <authorList>
            <consortium name="The MGC Project Team"/>
        </authorList>
    </citation>
    <scope>NUCLEOTIDE SEQUENCE [LARGE SCALE MRNA] (ISOFORM 1)</scope>
    <source>
        <tissue>Brain</tissue>
        <tissue>Muscle</tissue>
        <tissue>Uterus</tissue>
    </source>
</reference>
<reference key="8">
    <citation type="journal article" date="2001" name="J. Cell Biol.">
        <title>A functional interaction between the survival motor neuron complex and RNA polymerase II.</title>
        <authorList>
            <person name="Pellizzoni L."/>
            <person name="Charroux B."/>
            <person name="Rappsilber J."/>
            <person name="Mann M."/>
            <person name="Dreyfuss G."/>
        </authorList>
    </citation>
    <scope>PARTIAL PROTEIN SEQUENCE</scope>
    <scope>FUNCTION IN TRANSCRIPTIONAL REGULATION</scope>
    <scope>INTERACTION WITH SMN1; SMN COMPLEX AND RNA POLYMERASE II HOLOENZYME</scope>
    <scope>IDENTIFICATION BY MASS SPECTROMETRY</scope>
</reference>
<reference key="9">
    <citation type="journal article" date="1992" name="J. Biol. Chem.">
        <title>A new RNA helicase isolated from HeLa cells that catalytically translocates in the 3' to 5' direction.</title>
        <authorList>
            <person name="Lee C.G."/>
            <person name="Hurwitz J."/>
        </authorList>
    </citation>
    <scope>FUNCTION IN DNA/RNA UNWINDING</scope>
    <scope>CATALYTIC ACTIVITY</scope>
    <scope>RNA-BINDING</scope>
</reference>
<reference key="10">
    <citation type="journal article" date="1997" name="Cell">
        <title>RNA helicase A mediates association of CBP with RNA polymerase II.</title>
        <authorList>
            <person name="Nakajima T."/>
            <person name="Uchida C."/>
            <person name="Anderson S.F."/>
            <person name="Lee C.-G."/>
            <person name="Hurwitz J."/>
            <person name="Parvin J.D."/>
            <person name="Montminy M."/>
        </authorList>
    </citation>
    <scope>FUNCTION IN TRANSCRIPTIONAL REGULATION</scope>
    <scope>INTERACTION WITH CREBBP AND RNA POLYMERASE II HOLOENZYME</scope>
    <scope>MUTAGENESIS OF LYS-417</scope>
</reference>
<reference key="11">
    <citation type="journal article" date="1997" name="Science">
        <title>A cellular cofactor for the constitutive transport element of type D retrovirus.</title>
        <authorList>
            <person name="Tang H."/>
            <person name="Gaietta G.M."/>
            <person name="Fischer W.H."/>
            <person name="Ellisman M.H."/>
            <person name="Wong-Staal F."/>
        </authorList>
    </citation>
    <scope>FUNCTION IN MRNA EXPORT</scope>
    <scope>SUBCELLULAR LOCATION</scope>
    <scope>RNA-BINDING</scope>
    <scope>IDENTIFICATION BY MASS SPECTROMETRY</scope>
</reference>
<reference key="12">
    <citation type="journal article" date="1998" name="Nat. Genet.">
        <title>BRCA1 protein is linked to the RNA polymerase II holoenzyme complex via RNA helicase A.</title>
        <authorList>
            <person name="Anderson S.F."/>
            <person name="Schlegel B.P."/>
            <person name="Nakajima T."/>
            <person name="Wolpin E.S."/>
            <person name="Parvin J.D."/>
        </authorList>
    </citation>
    <scope>FUNCTION IN TRANSCRIPTIONAL REGULATION</scope>
    <scope>INTERACTION WITH BRCA1</scope>
</reference>
<reference key="13">
    <citation type="journal article" date="1999" name="J. Cell Sci.">
        <title>Pre-mRNA and mRNA binding of human nuclear DNA helicase II (RNA helicase A).</title>
        <authorList>
            <person name="Zhang S."/>
            <person name="Herrmann C."/>
            <person name="Grosse F."/>
        </authorList>
    </citation>
    <scope>SUBCELLULAR LOCATION</scope>
    <scope>RNA-BINDING</scope>
    <scope>DNA-BINDING</scope>
</reference>
<reference key="14">
    <citation type="journal article" date="1999" name="Mol. Cell. Biol.">
        <title>The carboxyl terminus of RNA helicase A contains a bidirectional nuclear transport domain.</title>
        <authorList>
            <person name="Tang H."/>
            <person name="McDonald D."/>
            <person name="Middlesworth T."/>
            <person name="Hope T.J."/>
            <person name="Wong-Staal F."/>
        </authorList>
    </citation>
    <scope>SUBCELLULAR LOCATION</scope>
    <scope>DOMAIN RGG</scope>
    <scope>MUTAGENESIS OF LYS-1163 AND ARG-1166</scope>
</reference>
<reference key="15">
    <citation type="journal article" date="1999" name="Proc. Natl. Acad. Sci. U.S.A.">
        <title>A role for RNA helicase A in post-transcriptional regulation of HIV type 1.</title>
        <authorList>
            <person name="Li J."/>
            <person name="Tang H."/>
            <person name="Mullen T.M."/>
            <person name="Westberg C."/>
            <person name="Reddy T.R."/>
            <person name="Rose D.W."/>
            <person name="Wong-Staal F."/>
        </authorList>
    </citation>
    <scope>FUNCTION (MICROBIAL INFECTION)</scope>
    <scope>RNA-BINDING (MICROBIAL INFECTION)</scope>
</reference>
<reference key="16">
    <citation type="journal article" date="2000" name="J. Biol. Chem.">
        <title>Specific interaction between RNA helicase A and Tap, two cellular proteins that bind to the constitutive transport element of type D retrovirus.</title>
        <authorList>
            <person name="Tang H."/>
            <person name="Wong-Staal F."/>
        </authorList>
    </citation>
    <scope>FUNCTION IN MRNA EXPORT</scope>
    <scope>INTERACTION WITH NXF1</scope>
</reference>
<reference key="17">
    <citation type="journal article" date="2001" name="J. Biol. Chem.">
        <title>Sequence-specific DNA binding activity of RNA helicase A to the p16INK4a promoter.</title>
        <authorList>
            <person name="Myoehaenen S."/>
            <person name="Baylin S.B."/>
        </authorList>
    </citation>
    <scope>FUNCTION IN TRANSCRIPTIONAL REGULATION</scope>
    <scope>PROMOTER DNA-BINDING</scope>
    <scope>IDENTIFICATION BY MASS SPECTROMETRY</scope>
</reference>
<reference key="18">
    <citation type="journal article" date="2001" name="J. Biol. Chem.">
        <title>A role of RNA helicase A in cis-acting transactivation response element-mediated transcriptional regulation of human immunodeficiency virus type 1.</title>
        <authorList>
            <person name="Fujii R."/>
            <person name="Okamoto M."/>
            <person name="Aratani S."/>
            <person name="Oishi T."/>
            <person name="Ohshima T."/>
            <person name="Taira K."/>
            <person name="Baba M."/>
            <person name="Fukamizu A."/>
            <person name="Nakajima T."/>
        </authorList>
    </citation>
    <scope>FUNCTION (MICROBIAL INFECTION)</scope>
    <scope>RNA-BINDING (MICROBIAL INFECTION)</scope>
</reference>
<reference key="19">
    <citation type="journal article" date="2001" name="J. Biol. Chem.">
        <title>Mapping the functional domains of HAP95, a protein that binds RNA helicase A and activates the constitutive transport element of type D retroviruses.</title>
        <authorList>
            <person name="Yang J.P."/>
            <person name="Tang H."/>
            <person name="Reddy T.R."/>
            <person name="Wong-Staal F."/>
        </authorList>
    </citation>
    <scope>FUNCTION IN MRNA EXPORT</scope>
    <scope>RNA-BINDING</scope>
    <scope>INTERACTION WITH AKAP8L</scope>
</reference>
<reference key="20">
    <citation type="journal article" date="2001" name="Mol. Cell. Biol.">
        <title>Dual roles of RNA helicase A in CREB-dependent transcription.</title>
        <authorList>
            <person name="Aratani S."/>
            <person name="Fujii R."/>
            <person name="Oishi T."/>
            <person name="Fujita H."/>
            <person name="Amano T."/>
            <person name="Ohshima T."/>
            <person name="Hagiwara M."/>
            <person name="Fukamizu A."/>
            <person name="Nakajima T."/>
        </authorList>
    </citation>
    <scope>FUNCTION IN TRANSCRIPTIONAL REGULATION</scope>
    <scope>CATALYTIC ACTIVITY</scope>
    <scope>INTERACTION WITH RNA POLYMERASE II HOLOENZYME</scope>
    <scope>ATP-BINDING</scope>
    <scope>DOMAIN MTAD</scope>
    <scope>MUTAGENESIS OF TRP-332; TRP-339 AND TRP-342</scope>
</reference>
<reference key="21">
    <citation type="journal article" date="2002" name="J. Biol. Chem.">
        <title>Nuclear DNA helicase II/RNA helicase A binds to filamentous actin.</title>
        <authorList>
            <person name="Zhang S."/>
            <person name="Buder K."/>
            <person name="Burkhardt C."/>
            <person name="Schlott B."/>
            <person name="Goerlach M."/>
            <person name="Grosse F."/>
        </authorList>
    </citation>
    <scope>FUNCTION</scope>
    <scope>INTERACTION WITH ACTB AND HNRNPC</scope>
    <scope>SUBCELLULAR LOCATION</scope>
</reference>
<reference key="22">
    <citation type="journal article" date="2002" name="Mol. Biol. Cell">
        <title>Functional proteomic analysis of human nucleolus.</title>
        <authorList>
            <person name="Scherl A."/>
            <person name="Coute Y."/>
            <person name="Deon C."/>
            <person name="Calle A."/>
            <person name="Kindbeiter K."/>
            <person name="Sanchez J.-C."/>
            <person name="Greco A."/>
            <person name="Hochstrasser D.F."/>
            <person name="Diaz J.-J."/>
        </authorList>
    </citation>
    <scope>SUBCELLULAR LOCATION [LARGE SCALE ANALYSIS]</scope>
    <source>
        <tissue>Cervix carcinoma</tissue>
    </source>
</reference>
<reference key="23">
    <citation type="journal article" date="2003" name="J. Mol. Biol.">
        <title>Selective regulation of gene expression by nuclear factor 110, a member of the NF90 family of double-stranded RNA-binding proteins.</title>
        <authorList>
            <person name="Reichman T.W."/>
            <person name="Parrott A.M."/>
            <person name="Fierro-Monti I."/>
            <person name="Caron D.J."/>
            <person name="Kao P.N."/>
            <person name="Lee C.G."/>
            <person name="Li H."/>
            <person name="Mathews M.B."/>
        </authorList>
    </citation>
    <scope>INTERACTION WITH ILF3</scope>
</reference>
<reference key="24">
    <citation type="journal article" date="2003" name="Mol. Cell. Biol.">
        <title>Antithetic effects of MBD2a on gene regulation.</title>
        <authorList>
            <person name="Fujita H."/>
            <person name="Fujii R."/>
            <person name="Aratani S."/>
            <person name="Amano T."/>
            <person name="Fukamizu A."/>
            <person name="Nakajima T."/>
        </authorList>
    </citation>
    <scope>FUNCTION IN TRANSCRIPTIONAL REGULATION</scope>
    <scope>INTERACTION WITH MBD2</scope>
</reference>
<reference key="25">
    <citation type="journal article" date="2003" name="Nature">
        <title>Proteomic characterization of the human centrosome by protein correlation profiling.</title>
        <authorList>
            <person name="Andersen J.S."/>
            <person name="Wilkinson C.J."/>
            <person name="Mayor T."/>
            <person name="Mortensen P."/>
            <person name="Nigg E.A."/>
            <person name="Mann M."/>
        </authorList>
    </citation>
    <scope>IDENTIFICATION BY MASS SPECTROMETRY</scope>
    <scope>SUBCELLULAR LOCATION [LARGE SCALE ANALYSIS]</scope>
    <source>
        <tissue>Lymphoblast</tissue>
    </source>
</reference>
<reference key="26">
    <citation type="journal article" date="2003" name="Nucleic Acids Res.">
        <title>RNA helicase A interacts with dsDNA and topoisomerase IIalpha.</title>
        <authorList>
            <person name="Zhou K."/>
            <person name="Choe K.-T."/>
            <person name="Zaidi Z."/>
            <person name="Wang Q."/>
            <person name="Mathews M.B."/>
            <person name="Lee C.-G."/>
        </authorList>
    </citation>
    <scope>FUNCTION IN DNA/RNA UNWINDING</scope>
    <scope>INTERACTION WITH TOP2A</scope>
    <scope>DOUBLE-STRAND DNA-BINDING AND RNA-BINDING</scope>
</reference>
<reference key="27">
    <citation type="journal article" date="2004" name="Eur. J. Biochem.">
        <title>RNA helicase A interacts with nuclear factor kappaB p65 and functions as a transcriptional coactivator.</title>
        <authorList>
            <person name="Tetsuka T."/>
            <person name="Uranishi H."/>
            <person name="Sanda T."/>
            <person name="Asamitsu K."/>
            <person name="Yang J.-P."/>
            <person name="Wong-Staal F."/>
            <person name="Okamoto T."/>
        </authorList>
    </citation>
    <scope>FUNCTION IN TRANSCRIPTIONAL REGULATION</scope>
    <scope>INTERACTION WITH RELA</scope>
    <scope>MUTAGENESIS OF LYS-417</scope>
</reference>
<reference key="28">
    <citation type="journal article" date="2004" name="J. Biol. Chem.">
        <title>Arginine methylation of RNA helicase a determines its subcellular localization.</title>
        <authorList>
            <person name="Smith W.A."/>
            <person name="Schurter B.T."/>
            <person name="Wong-Staal F."/>
            <person name="David M."/>
        </authorList>
    </citation>
    <scope>METHYLATION</scope>
    <scope>INTERACTION WITH PRMT1</scope>
    <scope>DOMAIN RGG</scope>
</reference>
<reference key="29">
    <citation type="journal article" date="2004" name="Nucleic Acids Res.">
        <title>DNA-dependent protein kinase (DNA-PK) phosphorylates nuclear DNA helicase II/RNA helicase A and hnRNP proteins in an RNA-dependent manner.</title>
        <authorList>
            <person name="Zhang S."/>
            <person name="Schlott B."/>
            <person name="Goerlach M."/>
            <person name="Grosse F."/>
        </authorList>
    </citation>
    <scope>INTERACTION WITH XRCC5</scope>
    <scope>PHOSPHORYLATION BY PRKDC</scope>
</reference>
<reference key="30">
    <citation type="journal article" date="2005" name="J. Biol. Chem.">
        <title>Actinomycin D induces histone gamma-H2AX foci and complex formation of gamma-H2AX with Ku70 and nuclear DNA helicase II.</title>
        <authorList>
            <person name="Mischo H.E."/>
            <person name="Hemmerich P."/>
            <person name="Grosse F."/>
            <person name="Zhang S."/>
        </authorList>
    </citation>
    <scope>INTERACTION WITH H2AX</scope>
</reference>
<reference key="31">
    <citation type="journal article" date="2005" name="J. Biol. Chem.">
        <title>Nuclear DNA helicase II (RNA helicase A) interacts with Werner syndrome helicase and stimulates its exonuclease activity.</title>
        <authorList>
            <person name="Friedemann J."/>
            <person name="Grosse F."/>
            <person name="Zhang S."/>
        </authorList>
    </citation>
    <scope>INTERACTION WITH WRN</scope>
</reference>
<reference key="32">
    <citation type="journal article" date="2006" name="Biochem. Biophys. Res. Commun.">
        <title>The nuclear import of RNA helicase A is mediated by importin-alpha3.</title>
        <authorList>
            <person name="Aratani S."/>
            <person name="Oishi T."/>
            <person name="Fuj ita H."/>
            <person name="Nakazawa M."/>
            <person name="Fujii R."/>
            <person name="Imamoto N."/>
            <person name="Yoneda Y."/>
            <person name="Fukamizu A."/>
            <person name="Nakajima T."/>
        </authorList>
    </citation>
    <scope>SUBCELLULAR LOCATION</scope>
    <scope>INTERACTION WITH THE IMPORTIN COMPLEX</scope>
    <scope>NUCLEAR LOCALIZATION SIGNAL</scope>
    <scope>MUTAGENESIS OF ARG-1160; LYS-1163 AND ARG-1166</scope>
</reference>
<reference key="33">
    <citation type="journal article" date="2006" name="Nat. Struct. Mol. Biol.">
        <title>RNA helicase A is necessary for translation of selected messenger RNAs.</title>
        <authorList>
            <person name="Hartman T.R."/>
            <person name="Qian S."/>
            <person name="Bolinger C."/>
            <person name="Fernandez S."/>
            <person name="Schoenberg D.R."/>
            <person name="Boris-Lawrie K."/>
        </authorList>
    </citation>
    <scope>FUNCTION IN VIRAL MRNA TRANSLATION (MICROBIAL INFECTION)</scope>
    <scope>FUNCTION IN MRNA TRANSLATION</scope>
    <scope>ASSOCIATION WITH POLYRIBOSOMES</scope>
    <scope>RNA-BINDING (MICROBIAL INFECTION)</scope>
    <scope>RNA-BINDING</scope>
    <scope>IDENTIFICATION BY MASS SPECTROMETRY</scope>
</reference>
<reference key="34">
    <citation type="journal article" date="2007" name="Biochem. Biophys. Res. Commun.">
        <title>The transcriptional factor Osterix directly interacts with RNA helicase A.</title>
        <authorList>
            <person name="Amorim B.R."/>
            <person name="Okamura H."/>
            <person name="Yoshida K."/>
            <person name="Qiu L."/>
            <person name="Morimoto H."/>
            <person name="Haneji T."/>
        </authorList>
    </citation>
    <scope>INTERACTION WITH SP7</scope>
    <scope>SUBCELLULAR LOCATION</scope>
    <scope>IDENTIFICATION BY MASS SPECTROMETRY</scope>
</reference>
<reference key="35">
    <citation type="journal article" date="2007" name="Cell Biol. Int.">
        <title>Werner syndrome helicase (WRN), nuclear DNA helicase II (NDH II) and histone gammaH2AX are localized to the centrosome.</title>
        <authorList>
            <person name="Zhang S."/>
            <person name="Hemmerich P."/>
            <person name="Grosse F."/>
        </authorList>
    </citation>
    <scope>INTERACTION WITH H2AX</scope>
    <scope>SUBCELLULAR LOCATION</scope>
</reference>
<reference key="36">
    <citation type="journal article" date="2007" name="J. Biol. Chem.">
        <title>ZIC2-dependent transcriptional regulation is mediated by DNA-dependent protein kinase, poly(ADP-ribose) polymerase, and RNA helicase A.</title>
        <authorList>
            <person name="Ishiguro A."/>
            <person name="Ideta M."/>
            <person name="Mikoshiba K."/>
            <person name="Chen D.J."/>
            <person name="Aruga J."/>
        </authorList>
    </citation>
    <scope>INTERACTION WITH ZIC2</scope>
</reference>
<reference key="37">
    <citation type="journal article" date="2007" name="Mol. Cell">
        <title>RNA helicase A interacts with RISC in human cells and functions in RISC loading.</title>
        <authorList>
            <person name="Robb G.B."/>
            <person name="Rana T.M."/>
        </authorList>
    </citation>
    <scope>FUNCTION IN RISC LOADING COMPLEX</scope>
    <scope>ASSOCIATION WITH THE RISC LOADING COMPLEX</scope>
    <scope>INTERACTION WITH AGO2; DICER1 AND TARBP2</scope>
    <scope>MUTAGENESIS OF LYS-417</scope>
</reference>
<reference key="38">
    <citation type="journal article" date="2007" name="Mol. Cell. Proteomics">
        <title>Molecular composition of IMP1 ribonucleoprotein granules.</title>
        <authorList>
            <person name="Joeson L."/>
            <person name="Vikesaa J."/>
            <person name="Krogh A."/>
            <person name="Nielsen L.K."/>
            <person name="Hansen T."/>
            <person name="Borup R."/>
            <person name="Johnsen A.H."/>
            <person name="Christiansen J."/>
            <person name="Nielsen F.C."/>
        </authorList>
    </citation>
    <scope>IDENTIFICATION IN A MRNP GRANULE COMPLEX</scope>
    <scope>INTERACTION WITH IGF2BP1</scope>
    <scope>SUBCELLULAR LOCATION</scope>
</reference>
<reference key="39">
    <citation type="journal article" date="2007" name="Science">
        <title>ATM and ATR substrate analysis reveals extensive protein networks responsive to DNA damage.</title>
        <authorList>
            <person name="Matsuoka S."/>
            <person name="Ballif B.A."/>
            <person name="Smogorzewska A."/>
            <person name="McDonald E.R. III"/>
            <person name="Hurov K.E."/>
            <person name="Luo J."/>
            <person name="Bakalarski C.E."/>
            <person name="Zhao Z."/>
            <person name="Solimini N."/>
            <person name="Lerenthal Y."/>
            <person name="Shiloh Y."/>
            <person name="Gygi S.P."/>
            <person name="Elledge S.J."/>
        </authorList>
    </citation>
    <scope>PHOSPHORYLATION [LARGE SCALE ANALYSIS] AT SER-321</scope>
    <scope>IDENTIFICATION BY MASS SPECTROMETRY [LARGE SCALE ANALYSIS]</scope>
    <source>
        <tissue>Embryonic kidney</tissue>
    </source>
</reference>
<reference key="40">
    <citation type="journal article" date="2008" name="Proc. Natl. Acad. Sci. U.S.A.">
        <title>A quantitative atlas of mitotic phosphorylation.</title>
        <authorList>
            <person name="Dephoure N."/>
            <person name="Zhou C."/>
            <person name="Villen J."/>
            <person name="Beausoleil S.A."/>
            <person name="Bakalarski C.E."/>
            <person name="Elledge S.J."/>
            <person name="Gygi S.P."/>
        </authorList>
    </citation>
    <scope>PHOSPHORYLATION [LARGE SCALE ANALYSIS] AT SER-87</scope>
    <scope>IDENTIFICATION BY MASS SPECTROMETRY [LARGE SCALE ANALYSIS]</scope>
    <source>
        <tissue>Cervix carcinoma</tissue>
    </source>
</reference>
<reference key="41">
    <citation type="journal article" date="2009" name="PLoS Pathog.">
        <title>An antiviral response directed by PKR phosphorylation of the RNA helicase A.</title>
        <authorList>
            <person name="Sadler A.J."/>
            <person name="Latchoumanin O."/>
            <person name="Hawkes D."/>
            <person name="Mak J."/>
            <person name="Williams B.R."/>
        </authorList>
    </citation>
    <scope>FUNCTION</scope>
    <scope>FUNCTION (MICROBIAL INFECTION)</scope>
    <scope>INTERACTION WITH EIF2AK2</scope>
    <scope>PHOSPHORYLATION BY EIF2AK2</scope>
</reference>
<reference key="42">
    <citation type="journal article" date="2009" name="RNA">
        <title>Control of c-myc mRNA stability by IGF2BP1-associated cytoplasmic RNPs.</title>
        <authorList>
            <person name="Weidensdorfer D."/>
            <person name="Stoehr N."/>
            <person name="Baude A."/>
            <person name="Lederer M."/>
            <person name="Koehn M."/>
            <person name="Schierhorn A."/>
            <person name="Buchmeier S."/>
            <person name="Wahle E."/>
            <person name="Huettelmaiery S."/>
        </authorList>
    </citation>
    <scope>FUNCTION IN MRNA STABILITY</scope>
    <scope>COMPONENT OF THE CRD-MEDIATED MRNA STABILIZATION COMPLEX</scope>
    <scope>IDENTIFICATION IN A MRNP COMPLEX</scope>
    <scope>SUBCELLULAR LOCATION</scope>
    <scope>IDENTIFICATION BY MASS SPECTROMETRY</scope>
</reference>
<reference key="43">
    <citation type="journal article" date="2009" name="Science">
        <title>Lysine acetylation targets protein complexes and co-regulates major cellular functions.</title>
        <authorList>
            <person name="Choudhary C."/>
            <person name="Kumar C."/>
            <person name="Gnad F."/>
            <person name="Nielsen M.L."/>
            <person name="Rehman M."/>
            <person name="Walther T.C."/>
            <person name="Olsen J.V."/>
            <person name="Mann M."/>
        </authorList>
    </citation>
    <scope>ACETYLATION [LARGE SCALE ANALYSIS] AT LYS-191; LYS-199 AND LYS-1024</scope>
    <scope>IDENTIFICATION BY MASS SPECTROMETRY [LARGE SCALE ANALYSIS]</scope>
</reference>
<reference key="44">
    <citation type="journal article" date="2010" name="Biochemistry">
        <title>Human DHX9 helicase unwinds triple-helical DNA structures.</title>
        <authorList>
            <person name="Jain A."/>
            <person name="Bacolla A."/>
            <person name="Chakraborty P."/>
            <person name="Grosse F."/>
            <person name="Vasquez K.M."/>
        </authorList>
    </citation>
    <scope>FUNCTION AS A TRIPLEX DNA HELICASE</scope>
    <scope>FUNCTION IN DNA REPLICATION</scope>
    <scope>CATALYTIC ACTIVITY</scope>
</reference>
<reference key="45">
    <citation type="journal article" date="2010" name="Proc. Natl. Acad. Sci. U.S.A.">
        <title>Aspartate-glutamate-alanine-histidine box motif (DEAH)/RNA helicase A helicases sense microbial DNA in human plasmacytoid dendritic cells.</title>
        <authorList>
            <person name="Kim T."/>
            <person name="Pazhoor S."/>
            <person name="Bao M."/>
            <person name="Zhang Z."/>
            <person name="Hanabuchi S."/>
            <person name="Facchinetti V."/>
            <person name="Bover L."/>
            <person name="Plumas J."/>
            <person name="Chaperot L."/>
            <person name="Qin J."/>
            <person name="Liu Y.J."/>
        </authorList>
    </citation>
    <scope>FUNCTION (MICROBIAL INFECTION)</scope>
    <scope>INTERACTION WITH MYD88</scope>
    <scope>MICROBIAL DNA-BINDING (MICROBIAL INFECTION)</scope>
    <scope>SUBCELLULAR LOCATION</scope>
    <scope>IDENTIFICATION BY MASS SPECTROMETRY</scope>
</reference>
<reference key="46">
    <citation type="journal article" date="2010" name="Sci. Signal.">
        <title>Quantitative phosphoproteomics reveals widespread full phosphorylation site occupancy during mitosis.</title>
        <authorList>
            <person name="Olsen J.V."/>
            <person name="Vermeulen M."/>
            <person name="Santamaria A."/>
            <person name="Kumar C."/>
            <person name="Miller M.L."/>
            <person name="Jensen L.J."/>
            <person name="Gnad F."/>
            <person name="Cox J."/>
            <person name="Jensen T.S."/>
            <person name="Nigg E.A."/>
            <person name="Brunak S."/>
            <person name="Mann M."/>
        </authorList>
    </citation>
    <scope>PHOSPHORYLATION [LARGE SCALE ANALYSIS] AT SER-87</scope>
    <scope>IDENTIFICATION BY MASS SPECTROMETRY [LARGE SCALE ANALYSIS]</scope>
    <source>
        <tissue>Cervix carcinoma</tissue>
    </source>
</reference>
<reference key="47">
    <citation type="journal article" date="2011" name="BMC Syst. Biol.">
        <title>Initial characterization of the human central proteome.</title>
        <authorList>
            <person name="Burkard T.R."/>
            <person name="Planyavsky M."/>
            <person name="Kaupe I."/>
            <person name="Breitwieser F.P."/>
            <person name="Buerckstuemmer T."/>
            <person name="Bennett K.L."/>
            <person name="Superti-Furga G."/>
            <person name="Colinge J."/>
        </authorList>
    </citation>
    <scope>IDENTIFICATION BY MASS SPECTROMETRY [LARGE SCALE ANALYSIS]</scope>
</reference>
<reference key="48">
    <citation type="journal article" date="2011" name="DNA Repair">
        <title>Human DHX9 helicase preferentially unwinds RNA-containing displacement loops (R-loops) and G-quadruplexes.</title>
        <authorList>
            <person name="Chakraborty P."/>
            <person name="Grosse F."/>
        </authorList>
    </citation>
    <scope>FUNCTION IN DNA/RNA UNWINDING</scope>
    <scope>CATALYTIC ACTIVITY</scope>
</reference>
<reference key="49">
    <citation type="journal article" date="2011" name="J. Immunol.">
        <title>DHX9 pairs with IPS-1 to sense double-stranded RNA in myeloid dendritic cells.</title>
        <authorList>
            <person name="Zhang Z."/>
            <person name="Yuan B."/>
            <person name="Lu N."/>
            <person name="Facchinetti V."/>
            <person name="Liu Y.J."/>
        </authorList>
    </citation>
    <scope>FUNCTION (MICROBIAL INFECTION)</scope>
    <scope>INTERACTION WITH MAVS</scope>
    <scope>DOUBLE STRANDED RNA-BINDING (MICROBIAL INFECTION)</scope>
</reference>
<reference key="50">
    <citation type="journal article" date="2011" name="Nucleic Acids Res.">
        <title>Evidence that Lin28 stimulates translation by recruiting RNA helicase A to polysomes.</title>
        <authorList>
            <person name="Jin J."/>
            <person name="Jing W."/>
            <person name="Lei X.X."/>
            <person name="Feng C."/>
            <person name="Peng S."/>
            <person name="Boris-Lawrie K."/>
            <person name="Huang Y."/>
        </authorList>
    </citation>
    <scope>FUNCTION IN MRNA TRANSLATION</scope>
    <scope>INTERACTION WITH LIN28A</scope>
</reference>
<reference key="51">
    <citation type="journal article" date="2012" name="RNA">
        <title>A novel role of RNA helicase A in regulation of translation of type I collagen mRNAs.</title>
        <authorList>
            <person name="Manojlovic Z."/>
            <person name="Stefanovic B."/>
        </authorList>
    </citation>
    <scope>FUNCTION IN MRNA TRANSLATION</scope>
    <scope>INTERACTION WITH LARP6</scope>
    <scope>MRNA-BINDING</scope>
    <scope>IDENTIFICATION BY MASS SPECTROMETRY</scope>
</reference>
<reference key="52">
    <citation type="journal article" date="2013" name="Biol. Chem.">
        <title>Subcellular localization and RNP formation of IGF2BPs (IGF2 mRNA-binding proteins) is modulated by distinct RNA-binding domains.</title>
        <authorList>
            <person name="Wachter K."/>
            <person name="Kohn M."/>
            <person name="Stohr N."/>
            <person name="Huttelmaier S."/>
        </authorList>
    </citation>
    <scope>INTERACTION WITH IGF2BP1; IGF2BP2 AND IGF2BP3</scope>
</reference>
<reference key="53">
    <citation type="journal article" date="2013" name="J. Proteome Res.">
        <title>Toward a comprehensive characterization of a human cancer cell phosphoproteome.</title>
        <authorList>
            <person name="Zhou H."/>
            <person name="Di Palma S."/>
            <person name="Preisinger C."/>
            <person name="Peng M."/>
            <person name="Polat A.N."/>
            <person name="Heck A.J."/>
            <person name="Mohammed S."/>
        </authorList>
    </citation>
    <scope>PHOSPHORYLATION [LARGE SCALE ANALYSIS] AT SER-125; SER-321; SER-449 AND SER-506</scope>
    <scope>IDENTIFICATION BY MASS SPECTROMETRY [LARGE SCALE ANALYSIS]</scope>
    <source>
        <tissue>Cervix carcinoma</tissue>
        <tissue>Erythroleukemia</tissue>
    </source>
</reference>
<reference key="54">
    <citation type="journal article" date="2013" name="Nat. Commun.">
        <title>GANP regulates recruitment of AID to immunoglobulin variable regions by modulating transcription and nucleosome occupancy.</title>
        <authorList>
            <person name="Singh S.K."/>
            <person name="Maeda K."/>
            <person name="Eid M.M."/>
            <person name="Almofty S.A."/>
            <person name="Ono M."/>
            <person name="Pham P."/>
            <person name="Goodman M.F."/>
            <person name="Sakaguchi N."/>
        </authorList>
    </citation>
    <scope>INTERACTION WITH MCM3AP</scope>
</reference>
<reference key="55">
    <citation type="journal article" date="2013" name="Nucleic Acids Res.">
        <title>DHX9 helicase is involved in preventing genomic instability induced by alternatively structured DNA in human cells.</title>
        <authorList>
            <person name="Jain A."/>
            <person name="Bacolla A."/>
            <person name="Del Mundo I.M."/>
            <person name="Zhao J."/>
            <person name="Wang G."/>
            <person name="Vasquez K.M."/>
        </authorList>
    </citation>
    <scope>FUNCTION AS A TRIPLEX DNA HELICASE</scope>
    <scope>CATALYTIC ACTIVITY</scope>
    <scope>TRIPLEX DNA-BINDING</scope>
</reference>
<reference key="56">
    <citation type="journal article" date="2013" name="PLoS ONE">
        <title>LMX1B is part of a transcriptional complex with PSPC1 and PSF.</title>
        <authorList>
            <person name="Hoekstra E.J."/>
            <person name="Mesman S."/>
            <person name="de Munnik W.A."/>
            <person name="Smidt M.P."/>
        </authorList>
    </citation>
    <scope>INTERACTION WITH LMX1B</scope>
    <scope>IDENTIFICATION BY MASS SPECTROMETRY</scope>
</reference>
<reference key="57">
    <citation type="journal article" date="2014" name="Biochim. Biophys. Acta">
        <title>Role of the OB-fold of RNA helicase A in the synthesis of HIV-1 RNA.</title>
        <authorList>
            <person name="Xing L."/>
            <person name="Niu M."/>
            <person name="Kleiman L."/>
        </authorList>
    </citation>
    <scope>FUNCTION (MICROBIAL INFECTION)</scope>
</reference>
<reference key="58">
    <citation type="journal article" date="2014" name="Biochim. Biophys. Acta">
        <title>Helicase associated 2 domain is essential for helicase activity of RNA helicase A.</title>
        <authorList>
            <person name="Xing L."/>
            <person name="Zhao X."/>
            <person name="Niu M."/>
            <person name="Kleiman L."/>
        </authorList>
    </citation>
    <scope>FUNCTION IN DNA/RNA UNWINDING</scope>
    <scope>CATALYTIC ACTIVITY</scope>
    <scope>DOMAINS</scope>
</reference>
<reference key="59">
    <citation type="journal article" date="2014" name="J. Biol. Chem.">
        <title>Suppression of the DHX9 helicase induces premature senescence in human diploid fibroblasts in a p53-dependent manner.</title>
        <authorList>
            <person name="Lee T."/>
            <person name="Di Paola D."/>
            <person name="Malina A."/>
            <person name="Mills J.R."/>
            <person name="Kreps A."/>
            <person name="Grosse F."/>
            <person name="Tang H."/>
            <person name="Zannis-Hadjopoulos M."/>
            <person name="Larsson O."/>
            <person name="Pelletier J."/>
        </authorList>
    </citation>
    <scope>FUNCTION IN DNA REPLICATION</scope>
    <scope>CHROMATIN-BINDING</scope>
    <scope>MUTAGENESIS OF ASP-511; GLU-512 AND SER-543</scope>
</reference>
<reference key="60">
    <citation type="journal article" date="2014" name="J. Proteomics">
        <title>An enzyme assisted RP-RPLC approach for in-depth analysis of human liver phosphoproteome.</title>
        <authorList>
            <person name="Bian Y."/>
            <person name="Song C."/>
            <person name="Cheng K."/>
            <person name="Dong M."/>
            <person name="Wang F."/>
            <person name="Huang J."/>
            <person name="Sun D."/>
            <person name="Wang L."/>
            <person name="Ye M."/>
            <person name="Zou H."/>
        </authorList>
    </citation>
    <scope>PHOSPHORYLATION [LARGE SCALE ANALYSIS] AT SER-87</scope>
    <scope>IDENTIFICATION BY MASS SPECTROMETRY [LARGE SCALE ANALYSIS]</scope>
    <source>
        <tissue>Liver</tissue>
    </source>
</reference>
<reference key="61">
    <citation type="journal article" date="2014" name="Mol. Cell. Proteomics">
        <title>Immunoaffinity enrichment and mass spectrometry analysis of protein methylation.</title>
        <authorList>
            <person name="Guo A."/>
            <person name="Gu H."/>
            <person name="Zhou J."/>
            <person name="Mulhern D."/>
            <person name="Wang Y."/>
            <person name="Lee K.A."/>
            <person name="Yang V."/>
            <person name="Aguiar M."/>
            <person name="Kornhauser J."/>
            <person name="Jia X."/>
            <person name="Ren J."/>
            <person name="Beausoleil S.A."/>
            <person name="Silva J.C."/>
            <person name="Vemulapalli V."/>
            <person name="Bedford M.T."/>
            <person name="Comb M.J."/>
        </authorList>
    </citation>
    <scope>METHYLATION [LARGE SCALE ANALYSIS] AT LYS-146 AND ARG-1175</scope>
    <scope>IDENTIFICATION BY MASS SPECTROMETRY [LARGE SCALE ANALYSIS]</scope>
    <source>
        <tissue>Colon carcinoma</tissue>
    </source>
</reference>
<reference key="62">
    <citation type="journal article" date="2016" name="J. Mol. Biol.">
        <title>DHX9/RHA binding to the PBS-segment of the genomic RNA during HIV-1 assembly bolsters virion infectivity.</title>
        <authorList>
            <person name="Boeras I."/>
            <person name="Song Z."/>
            <person name="Moran A."/>
            <person name="Franklin J."/>
            <person name="Brown W.C."/>
            <person name="Johnson M."/>
            <person name="Boris-Lawrie K."/>
            <person name="Heng X."/>
        </authorList>
    </citation>
    <scope>FUNCTION (MICROBIAL INFECTION)</scope>
    <scope>RNA-BINDING (MICROBIAL INFECTION)</scope>
</reference>
<reference key="63">
    <citation type="journal article" date="2017" name="Elife">
        <title>Human Nup98 regulates the localization and activity of DExH/D-box helicase DHX9.</title>
        <authorList>
            <person name="Capitanio J.S."/>
            <person name="Montpetit B."/>
            <person name="Wozniak R.W."/>
        </authorList>
    </citation>
    <scope>FUNCTION IN POST-TRANSCRIPTIONAL PROCESSING</scope>
    <scope>INTERACTION WITH NUP98</scope>
    <scope>SUBCELLULAR LOCATION</scope>
    <scope>IDENTIFICATION BY MASS SPECTROMETRY</scope>
    <scope>MUTAGENESIS OF ILE-347 AND LYS-417</scope>
</reference>
<reference key="64">
    <citation type="journal article" date="2017" name="Nat. Struct. Mol. Biol.">
        <title>Site-specific mapping of the human SUMO proteome reveals co-modification with phosphorylation.</title>
        <authorList>
            <person name="Hendriks I.A."/>
            <person name="Lyon D."/>
            <person name="Young C."/>
            <person name="Jensen L.J."/>
            <person name="Vertegaal A.C."/>
            <person name="Nielsen M.L."/>
        </authorList>
    </citation>
    <scope>SUMOYLATION [LARGE SCALE ANALYSIS] AT LYS-697</scope>
    <scope>IDENTIFICATION BY MASS SPECTROMETRY [LARGE SCALE ANALYSIS]</scope>
</reference>
<reference key="65">
    <citation type="journal article" date="2017" name="Nature">
        <title>DHX9 suppresses RNA processing defects originating from the Alu invasion of the human genome.</title>
        <authorList>
            <person name="Aktas T."/>
            <person name="Avsar Ilik I."/>
            <person name="Maticzka D."/>
            <person name="Bhardwaj V."/>
            <person name="Pessoa Rodrigues C."/>
            <person name="Mittler G."/>
            <person name="Manke T."/>
            <person name="Backofen R."/>
            <person name="Akhtar A."/>
        </authorList>
    </citation>
    <scope>FUNCTION IN POST-TRANSCRIPTIONAL PROCESSING</scope>
    <scope>INTERACTION WITH ADAR</scope>
    <scope>ALU RNA-BINDING</scope>
</reference>
<reference key="66">
    <citation type="journal article" date="2017" name="Nature">
        <title>Nlrp9b inflammasome restricts rotavirus infection in intestinal epithelial cells.</title>
        <authorList>
            <person name="Zhu S."/>
            <person name="Ding S."/>
            <person name="Wang P."/>
            <person name="Wei Z."/>
            <person name="Pan W."/>
            <person name="Palm N.W."/>
            <person name="Yang Y."/>
            <person name="Yu H."/>
            <person name="Li H.B."/>
            <person name="Wang G."/>
            <person name="Lei X."/>
            <person name="de Zoete M.R."/>
            <person name="Zhao J."/>
            <person name="Zheng Y."/>
            <person name="Chen H."/>
            <person name="Zhao Y."/>
            <person name="Jurado K.A."/>
            <person name="Feng N."/>
            <person name="Shan L."/>
            <person name="Kluger Y."/>
            <person name="Lu J."/>
            <person name="Abraham C."/>
            <person name="Fikrig E."/>
            <person name="Greenberg H.B."/>
            <person name="Flavell R.A."/>
        </authorList>
    </citation>
    <scope>FUNCTION</scope>
    <scope>INTERACTION WITH NLRP9</scope>
</reference>
<reference key="67">
    <citation type="journal article" date="2019" name="J. Virol.">
        <title>The Host DHX9 DExH-Box Helicase Is Recruited to Chikungunya Virus Replication Complexes for Optimal Genomic RNA Translation.</title>
        <authorList>
            <person name="Matkovic R."/>
            <person name="Bernard E."/>
            <person name="Fontanel S."/>
            <person name="Eldin P."/>
            <person name="Chazal N."/>
            <person name="Hassan Hersi D."/>
            <person name="Merits A."/>
            <person name="Peloponese J.M. Jr."/>
            <person name="Briant L."/>
        </authorList>
    </citation>
    <scope>INTERACTION WITH CHIKUNGUNYA VIRUS NON-STRUCTURAL PROTEIN 3 (MICROBIAL INFECTION)</scope>
</reference>
<reference key="68">
    <citation type="journal article" date="2019" name="J. Virol.">
        <title>Cellular RNA Helicase DHX9 Interacts with the Essential Epstein-Barr Virus (EBV) Protein SM and Restricts EBV Lytic Replication.</title>
        <authorList>
            <person name="Fu W."/>
            <person name="Verma D."/>
            <person name="Burton A."/>
            <person name="Swaminathan S."/>
        </authorList>
    </citation>
    <scope>INTERACTION WITH EPSTEIN BARR VIRUS MRNA EXPORT FACTOR ICP27 HOMOLOG (MICROBIAL INFECTION)</scope>
</reference>
<reference key="69">
    <citation type="journal article" date="2010" name="J. Mol. Biol.">
        <title>Crystal structure of human RNA helicase A (DHX9): structural basis for unselective nucleotide base binding in a DEAD-box variant protein.</title>
        <authorList>
            <person name="Schutz P."/>
            <person name="Wahlberg E."/>
            <person name="Karlberg T."/>
            <person name="Hammarstrom M."/>
            <person name="Collins R."/>
            <person name="Flores A."/>
            <person name="Schuler H."/>
        </authorList>
    </citation>
    <scope>X-RAY CRYSTALLOGRAPHY (2.8 ANGSTROMS) OF 329-563 IN COMPLEX WITH ADP AND MANGANESE</scope>
    <scope>NUCLEOTIDE-BINDING</scope>
    <scope>CATALYTIC ACTIVITY</scope>
</reference>
<reference key="70">
    <citation type="journal article" date="2013" name="Nucleic Acids Res.">
        <title>Structural insights into RISC assembly facilitated by dsRNA-binding domains of human RNA helicase A (DHX9).</title>
        <authorList>
            <person name="Fu Q."/>
            <person name="Yuan Y.A."/>
        </authorList>
    </citation>
    <scope>X-RAY CRYSTALLOGRAPHY (2.29 ANGSTROMS) OF 1-86 AND 169-263 IN COMPLEX WITH SIRNA</scope>
    <scope>DOUBLE-STRANDED RNA-BINDING</scope>
    <scope>INTERACTION WITH AGO2 AND TARBP2</scope>
    <scope>MUTAGENESIS OF LYS-5; ASN-6; TYR-9; ASN-30; ASN-53; LYS-54; LYS-55; LYS-182; ASN-186; GLN-187; HIS-207; ASN-234; LYS-235 AND LYS-236</scope>
</reference>
<reference key="71">
    <citation type="journal article" date="2023" name="Am. J. Hum. Genet.">
        <title>Monoallelic variation in DHX9, the gene encoding the DExH-box helicase DHX9, underlies neurodevelopment disorders and Charcot-Marie-Tooth disease.</title>
        <authorList>
            <consortium name="Undiagnosed Diseases Network"/>
            <person name="Calame D.G."/>
            <person name="Guo T."/>
            <person name="Wang C."/>
            <person name="Garrett L."/>
            <person name="Jolly A."/>
            <person name="Dawood M."/>
            <person name="Kurolap A."/>
            <person name="Henig N.Z."/>
            <person name="Fatih J.M."/>
            <person name="Herman I."/>
            <person name="Du H."/>
            <person name="Mitani T."/>
            <person name="Becker L."/>
            <person name="Rathkolb B."/>
            <person name="Gerlini R."/>
            <person name="Seisenberger C."/>
            <person name="Marschall S."/>
            <person name="Hunter J.V."/>
            <person name="Gerard A."/>
            <person name="Heidlebaugh A."/>
            <person name="Challman T."/>
            <person name="Spillmann R.C."/>
            <person name="Jhangiani S.N."/>
            <person name="Coban-Akdemir Z."/>
            <person name="Lalani S."/>
            <person name="Liu L."/>
            <person name="Revah-Politi A."/>
            <person name="Iglesias A."/>
            <person name="Guzman E."/>
            <person name="Baugh E."/>
            <person name="Boddaert N."/>
            <person name="Rondeau S."/>
            <person name="Ormieres C."/>
            <person name="Barcia G."/>
            <person name="Tan Q.K.G."/>
            <person name="Thiffault I."/>
            <person name="Pastinen T."/>
            <person name="Sheikh K."/>
            <person name="Biliciler S."/>
            <person name="Mei D."/>
            <person name="Melani F."/>
            <person name="Shashi V."/>
            <person name="Yaron Y."/>
            <person name="Steele M."/>
            <person name="Wakeling E."/>
            <person name="Oestergaard E."/>
            <person name="Nazaryan-Petersen L."/>
            <person name="Millan F."/>
            <person name="Santiago-Sim T."/>
            <person name="Thevenon J."/>
            <person name="Bruel A.L."/>
            <person name="Thauvin-Robinet C."/>
            <person name="Popp D."/>
            <person name="Platzer K."/>
            <person name="Gawlinski P."/>
            <person name="Wiszniewski W."/>
            <person name="Marafi D."/>
            <person name="Pehlivan D."/>
            <person name="Posey J.E."/>
            <person name="Gibbs R.A."/>
            <person name="Gailus-Durner V."/>
            <person name="Guerrini R."/>
            <person name="Fuchs H."/>
            <person name="Hrabe de Angelis M."/>
            <person name="Hoelter S.M."/>
            <person name="Cheung H.H."/>
            <person name="Gu S."/>
            <person name="Lupski J.R."/>
        </authorList>
    </citation>
    <scope>VARIANTS MRD75 GLN-141; 229-ARG--TYR-1270 DEL; GLU-411; ILE-473; GLY-608; TRP-761; GLN-761; 764-ARG--TYR-1270 DEL; GLN-1052; ARG-1163; PRO-1166 AND 1263-GLN--TYR-1270 DEL</scope>
    <scope>VARIANTS THR-837; GLY-846 AND THR-1255</scope>
    <scope>INVOLVEMENT IN MRD75</scope>
    <scope>CHARACTERIZATION OF VARIANTS MRD75 GLU-411; ILE-473; GLY-608; GLN-761; ARG-1163 AND PRO-1166</scope>
    <scope>FUNCTION</scope>
    <scope>SUBCELLULAR LOCATION</scope>
</reference>
<reference key="72">
    <citation type="journal article" date="2023" name="Eur. J. Med. Genet.">
        <title>Heterozygous loss-of-function DHX9 variants are associated with neurodevelopmental disorders: Human genetic and experimental evidences.</title>
        <authorList>
            <person name="Yamada M."/>
            <person name="Nitta Y."/>
            <person name="Uehara T."/>
            <person name="Suzuki H."/>
            <person name="Miya F."/>
            <person name="Takenouchi T."/>
            <person name="Tamura M."/>
            <person name="Ayabe S."/>
            <person name="Yoshiki A."/>
            <person name="Maeno A."/>
            <person name="Saga Y."/>
            <person name="Furuse T."/>
            <person name="Yamada I."/>
            <person name="Okamoto N."/>
            <person name="Kosaki K."/>
            <person name="Sugie A."/>
        </authorList>
    </citation>
    <scope>VARIANTS MRD75 ARG-414 AND GLN-1052</scope>
</reference>
<name>DHX9_HUMAN</name>
<keyword id="KW-0002">3D-structure</keyword>
<keyword id="KW-0007">Acetylation</keyword>
<keyword id="KW-0010">Activator</keyword>
<keyword id="KW-0025">Alternative splicing</keyword>
<keyword id="KW-0067">ATP-binding</keyword>
<keyword id="KW-1268">Autism spectrum disorder</keyword>
<keyword id="KW-0090">Biological rhythms</keyword>
<keyword id="KW-0963">Cytoplasm</keyword>
<keyword id="KW-0206">Cytoskeleton</keyword>
<keyword id="KW-0903">Direct protein sequencing</keyword>
<keyword id="KW-0225">Disease variant</keyword>
<keyword id="KW-0235">DNA replication</keyword>
<keyword id="KW-0238">DNA-binding</keyword>
<keyword id="KW-0347">Helicase</keyword>
<keyword id="KW-0945">Host-virus interaction</keyword>
<keyword id="KW-0378">Hydrolase</keyword>
<keyword id="KW-0391">Immunity</keyword>
<keyword id="KW-0395">Inflammatory response</keyword>
<keyword id="KW-0399">Innate immunity</keyword>
<keyword id="KW-0991">Intellectual disability</keyword>
<keyword id="KW-1017">Isopeptide bond</keyword>
<keyword id="KW-0464">Manganese</keyword>
<keyword id="KW-0479">Metal-binding</keyword>
<keyword id="KW-0488">Methylation</keyword>
<keyword id="KW-0507">mRNA processing</keyword>
<keyword id="KW-0508">mRNA splicing</keyword>
<keyword id="KW-0509">mRNA transport</keyword>
<keyword id="KW-0547">Nucleotide-binding</keyword>
<keyword id="KW-0539">Nucleus</keyword>
<keyword id="KW-0597">Phosphoprotein</keyword>
<keyword id="KW-1267">Proteomics identification</keyword>
<keyword id="KW-1185">Reference proteome</keyword>
<keyword id="KW-0677">Repeat</keyword>
<keyword id="KW-0694">RNA-binding</keyword>
<keyword id="KW-0943">RNA-mediated gene silencing</keyword>
<keyword id="KW-0804">Transcription</keyword>
<keyword id="KW-0805">Transcription regulation</keyword>
<keyword id="KW-0806">Transcription termination</keyword>
<keyword id="KW-0810">Translation regulation</keyword>
<keyword id="KW-0813">Transport</keyword>
<keyword id="KW-0832">Ubl conjugation</keyword>
<organism>
    <name type="scientific">Homo sapiens</name>
    <name type="common">Human</name>
    <dbReference type="NCBI Taxonomy" id="9606"/>
    <lineage>
        <taxon>Eukaryota</taxon>
        <taxon>Metazoa</taxon>
        <taxon>Chordata</taxon>
        <taxon>Craniata</taxon>
        <taxon>Vertebrata</taxon>
        <taxon>Euteleostomi</taxon>
        <taxon>Mammalia</taxon>
        <taxon>Eutheria</taxon>
        <taxon>Euarchontoglires</taxon>
        <taxon>Primates</taxon>
        <taxon>Haplorrhini</taxon>
        <taxon>Catarrhini</taxon>
        <taxon>Hominidae</taxon>
        <taxon>Homo</taxon>
    </lineage>
</organism>
<sequence length="1270" mass="140958">MGDVKNFLYAWCGKRKMTPSYEIRAVGNKNRQKFMCEVQVEGYNYTGMGNSTNKKDAQSNAARDFVNYLVRINEIKSEEVPAFGVASPPPLTDTPDTTANAEGDLPTTMGGPLPPHLALKAENNSEVGASGYGVPGPTWDRGANLKDYYSRKEEQEVQATLESEEVDLNAGLHGNWTLENAKARLNQYFQKEKIQGEYKYTQVGPDHNRSFIAEMTIYIKQLGRRIFAREHGSNKKLAAQSCALSLVRQLYHLGVVEAYSGLTKKKEGETVEPYKVNLSQDLEHQLQNIIQELNLEILPPPEDPSVPVALNIGKLAQFEPSQRQNQVGVVPWSPPQSNWNPWTSSNIDEGPLAFATPEQISMDLKNELMYQLEQDHDLQAILQERELLPVKKFESEILEAISQNSVVIIRGATGCGKTTQVPQFILDDFIQNDRAAECNIVVTQPRRISAVSVAERVAFERGEEPGKSCGYSVRFESILPRPHASIMFCTVGVLLRKLEAGIRGISHVIVDEIHERDINTDFLLVVLRDVVQAYPEVRIVLMSATIDTSMFCEYFFNCPIIEVYGRTYPVQEYFLEDCIQMTHFVPPPKDKKKKDKDDDGGEDDDANCNLICGDEYGPETRLSMSQLNEKETPFELIEALLKYIETLNVPGAVLVFLPGWNLIYTMQKHLEMNPHFGSHRYQILPLHSQIPREEQRKVFDPVPVGVTKVILSTNIAETSITINDVVYVIDSCKQKVKLFTAHNNMTNYATVWASKTNLEQRKGRAGRVRPGFCFHLCSRARFERLETHMTPEMFRTPLHEIALSIKLLRLGGIGQFLAKAIEPPPLDAVIEAEHTLRELDALDANDELTPLGRILAKLPIEPRFGKMMIMGCIFYVGDAICTIAAATCFPEPFINEGKRLGYIHRNFAGNRFSDHVALLSVFQAWDDARMGGEEAEIRFCEHKRLNMATLRMTWEAKVQLKEILINSGFPEDCLLTQVFTNTGPDNNLDVVISLLAFGVYPNVCYHKEKRKILTTEGRNALIHKSSVNCPFSSQDMKYPSPFFVFGEKIRTRAISAKGMTLVTPLQLLLFASKKVQSDGQIVLVDDWIKLQISHEAAACITGLRAAMEALVVEVTKQPAIISQLDPVNERMLNMIRQISRPSAAGINLMIGSTRYGDGPRPPKMARYDNGSGYRRGGSSYSGGGYGGGYSSGGYGSGGYGGSANSFRAGYGAGVGGGYRGVSRGGFRGNSGGDYRGPSGGYRGSGGFQRGGGRGAYGTGYFGQGRGGGGY</sequence>
<feature type="chain" id="PRO_0000055157" description="ATP-dependent RNA helicase A">
    <location>
        <begin position="1"/>
        <end position="1270"/>
    </location>
</feature>
<feature type="domain" description="DRBM 1" evidence="3 44 61">
    <location>
        <begin position="3"/>
        <end position="71"/>
    </location>
</feature>
<feature type="domain" description="DRBM 2" evidence="3 44 61">
    <location>
        <begin position="180"/>
        <end position="252"/>
    </location>
</feature>
<feature type="domain" description="Helicase ATP-binding" evidence="4 36">
    <location>
        <begin position="398"/>
        <end position="564"/>
    </location>
</feature>
<feature type="domain" description="Helicase C-terminal" evidence="5">
    <location>
        <begin position="636"/>
        <end position="809"/>
    </location>
</feature>
<feature type="region of interest" description="Interaction with CREBBP" evidence="63">
    <location>
        <begin position="1"/>
        <end position="250"/>
    </location>
</feature>
<feature type="region of interest" description="siRNA-binding" evidence="44 77">
    <location>
        <begin position="5"/>
        <end position="9"/>
    </location>
</feature>
<feature type="region of interest" description="siRNA-binding" evidence="44 77">
    <location>
        <begin position="53"/>
        <end position="55"/>
    </location>
</feature>
<feature type="region of interest" description="Disordered" evidence="6">
    <location>
        <begin position="83"/>
        <end position="118"/>
    </location>
</feature>
<feature type="region of interest" description="siRNA-binding" evidence="44 76">
    <location>
        <begin position="182"/>
        <end position="186"/>
    </location>
</feature>
<feature type="region of interest" description="Interaction with BRCA1" evidence="64">
    <location>
        <begin position="230"/>
        <end position="325"/>
    </location>
</feature>
<feature type="region of interest" description="siRNA-binding" evidence="72">
    <location>
        <begin position="234"/>
        <end position="236"/>
    </location>
</feature>
<feature type="region of interest" description="Necessary for interaction with RNA polymerase II holoenzyme" evidence="63">
    <location>
        <begin position="255"/>
        <end position="664"/>
    </location>
</feature>
<feature type="region of interest" description="Necessary for interaction with H2AX" evidence="25">
    <location>
        <begin position="313"/>
        <end position="952"/>
    </location>
</feature>
<feature type="region of interest" description="MTAD" evidence="14">
    <location>
        <begin position="331"/>
        <end position="380"/>
    </location>
</feature>
<feature type="region of interest" description="Core helicase" evidence="73">
    <location>
        <begin position="398"/>
        <end position="809"/>
    </location>
</feature>
<feature type="region of interest" description="Disordered" evidence="6">
    <location>
        <begin position="588"/>
        <end position="608"/>
    </location>
</feature>
<feature type="region of interest" description="HA2" evidence="49">
    <location>
        <begin position="831"/>
        <end position="919"/>
    </location>
</feature>
<feature type="region of interest" description="OB-fold" evidence="38 49 50">
    <location>
        <begin position="958"/>
        <end position="1074"/>
    </location>
</feature>
<feature type="region of interest" description="RGG" evidence="8 49 50 61">
    <location>
        <begin position="1150"/>
        <end position="1270"/>
    </location>
</feature>
<feature type="region of interest" description="Disordered" evidence="6">
    <location>
        <begin position="1229"/>
        <end position="1248"/>
    </location>
</feature>
<feature type="short sequence motif" description="DEIH box">
    <location>
        <begin position="511"/>
        <end position="514"/>
    </location>
</feature>
<feature type="short sequence motif" description="Nuclear localization signal (NLS1)" evidence="2">
    <location>
        <begin position="586"/>
        <end position="595"/>
    </location>
</feature>
<feature type="short sequence motif" description="Nuclear localization signal (NLS2)" evidence="27">
    <location>
        <begin position="1155"/>
        <end position="1173"/>
    </location>
</feature>
<feature type="binding site" evidence="14 36 75">
    <location>
        <begin position="411"/>
        <end position="419"/>
    </location>
    <ligand>
        <name>ATP</name>
        <dbReference type="ChEBI" id="CHEBI:30616"/>
    </ligand>
</feature>
<feature type="binding site" evidence="36 75">
    <location>
        <position position="418"/>
    </location>
    <ligand>
        <name>Mn(2+)</name>
        <dbReference type="ChEBI" id="CHEBI:29035"/>
    </ligand>
</feature>
<feature type="binding site" evidence="36 75">
    <location>
        <position position="512"/>
    </location>
    <ligand>
        <name>Mn(2+)</name>
        <dbReference type="ChEBI" id="CHEBI:29035"/>
    </ligand>
</feature>
<feature type="modified residue" description="Phosphoserine" evidence="79 81 84">
    <location>
        <position position="87"/>
    </location>
</feature>
<feature type="modified residue" description="Phosphoserine" evidence="82">
    <location>
        <position position="125"/>
    </location>
</feature>
<feature type="modified residue" description="N6-acetyllysine; alternate" evidence="1">
    <location>
        <position position="146"/>
    </location>
</feature>
<feature type="modified residue" description="N6-methyllysine; alternate" evidence="83">
    <location>
        <position position="146"/>
    </location>
</feature>
<feature type="modified residue" description="N6-acetyllysine" evidence="80">
    <location>
        <position position="191"/>
    </location>
</feature>
<feature type="modified residue" description="N6-acetyllysine" evidence="80">
    <location>
        <position position="199"/>
    </location>
</feature>
<feature type="modified residue" description="Phosphoserine" evidence="78 82">
    <location>
        <position position="321"/>
    </location>
</feature>
<feature type="modified residue" description="Phosphoserine" evidence="82">
    <location>
        <position position="449"/>
    </location>
</feature>
<feature type="modified residue" description="Phosphoserine" evidence="82">
    <location>
        <position position="506"/>
    </location>
</feature>
<feature type="modified residue" description="N6-acetyllysine" evidence="80">
    <location>
        <position position="1024"/>
    </location>
</feature>
<feature type="modified residue" description="Asymmetric dimethylarginine" evidence="1">
    <location>
        <position position="1166"/>
    </location>
</feature>
<feature type="modified residue" description="Omega-N-methylarginine" evidence="83">
    <location>
        <position position="1175"/>
    </location>
</feature>
<feature type="modified residue" description="Asymmetric dimethylarginine" evidence="1">
    <location>
        <position position="1219"/>
    </location>
</feature>
<feature type="modified residue" description="Asymmetric dimethylarginine" evidence="1">
    <location>
        <position position="1235"/>
    </location>
</feature>
<feature type="modified residue" description="Asymmetric dimethylarginine" evidence="1">
    <location>
        <position position="1242"/>
    </location>
</feature>
<feature type="modified residue" description="Asymmetric dimethylarginine" evidence="1">
    <location>
        <position position="1249"/>
    </location>
</feature>
<feature type="modified residue" description="Asymmetric dimethylarginine" evidence="1">
    <location>
        <position position="1265"/>
    </location>
</feature>
<feature type="cross-link" description="Glycyl lysine isopeptide (Lys-Gly) (interchain with G-Cter in SUMO2)" evidence="85">
    <location>
        <position position="697"/>
    </location>
</feature>
<feature type="splice variant" id="VSP_042314" description="In isoform 2." evidence="67 69">
    <location>
        <begin position="1"/>
        <end position="1035"/>
    </location>
</feature>
<feature type="sequence variant" id="VAR_090134" description="In MRD75; uncertain significance." evidence="58">
    <original>R</original>
    <variation>Q</variation>
    <location>
        <position position="141"/>
    </location>
</feature>
<feature type="sequence variant" id="VAR_090135" description="In MRD75; likely pathogenic." evidence="58">
    <location>
        <begin position="229"/>
        <end position="1270"/>
    </location>
</feature>
<feature type="sequence variant" id="VAR_090136" description="In MRD75; likely pathogenic; decreased ATP hydrolysis activity." evidence="58">
    <original>G</original>
    <variation>E</variation>
    <location>
        <position position="411"/>
    </location>
</feature>
<feature type="sequence variant" id="VAR_090137" description="In MRD75; likely pathogenic." evidence="57">
    <original>G</original>
    <variation>R</variation>
    <location>
        <position position="414"/>
    </location>
</feature>
<feature type="sequence variant" id="VAR_090138" description="In MRD75; uncertain significance; unchanged ATP hydrolysis activity; dbSNP:rs367719735." evidence="58">
    <original>V</original>
    <variation>I</variation>
    <location>
        <position position="473"/>
    </location>
</feature>
<feature type="sequence variant" id="VAR_090139" description="In MRD75; uncertain significance; unchanged ATP hydrolysis activity; dbSNP:rs1246283621." evidence="58">
    <original>C</original>
    <variation>G</variation>
    <location>
        <position position="608"/>
    </location>
</feature>
<feature type="sequence variant" id="VAR_090140" description="In MRD75; likely pathogenic; increased ATP hydrolysis activity." evidence="58">
    <original>R</original>
    <variation>Q</variation>
    <location>
        <position position="761"/>
    </location>
</feature>
<feature type="sequence variant" id="VAR_090141" description="In MRD75; likely pathogenic." evidence="58">
    <original>R</original>
    <variation>W</variation>
    <location>
        <position position="761"/>
    </location>
</feature>
<feature type="sequence variant" id="VAR_090142" description="In MRD75; likely pathogenic." evidence="58">
    <location>
        <begin position="764"/>
        <end position="1270"/>
    </location>
</feature>
<feature type="sequence variant" id="VAR_090143" description="Found in a patient with Charcot-Marie-Tooth disease axonal type; uncertain significance; dbSNP:rs566509354." evidence="58">
    <original>R</original>
    <variation>T</variation>
    <location>
        <position position="837"/>
    </location>
</feature>
<feature type="sequence variant" id="VAR_090144" description="Found in a patient with Charcot-Marie-Tooth disease axonal type; uncertain significance." evidence="58">
    <original>D</original>
    <variation>G</variation>
    <location>
        <position position="846"/>
    </location>
</feature>
<feature type="sequence variant" id="VAR_052179" description="In dbSNP:rs1049264." evidence="59">
    <original>I</original>
    <variation>V</variation>
    <location>
        <position position="894"/>
    </location>
</feature>
<feature type="sequence variant" id="VAR_090145" description="In MRD75; uncertain significance; dbSNP:rs1649181328." evidence="57 58">
    <original>R</original>
    <variation>Q</variation>
    <location>
        <position position="1052"/>
    </location>
</feature>
<feature type="sequence variant" id="VAR_090146" description="In MRD75; likely pathogenic; does not localize to the nucleus." evidence="58">
    <original>K</original>
    <variation>R</variation>
    <location>
        <position position="1163"/>
    </location>
</feature>
<feature type="sequence variant" id="VAR_090147" description="In MRD75; likely pathogenic; does not localize to the nucleus." evidence="58">
    <original>R</original>
    <variation>P</variation>
    <location>
        <position position="1166"/>
    </location>
</feature>
<feature type="sequence variant" id="VAR_090148" description="Found in a patient with Charcot-Marie-Tooth disease axonal type; uncertain significance; dbSNP:rs201196588." evidence="58">
    <original>A</original>
    <variation>T</variation>
    <location>
        <position position="1255"/>
    </location>
</feature>
<feature type="sequence variant" id="VAR_090149" description="In MRD75; uncertain significance." evidence="58">
    <location>
        <begin position="1263"/>
        <end position="1270"/>
    </location>
</feature>
<feature type="mutagenesis site" description="Reduces siRNA-binding and interaction with AGO2; when associated with A-6." evidence="44">
    <original>K</original>
    <variation>A</variation>
    <location>
        <position position="5"/>
    </location>
</feature>
<feature type="mutagenesis site" description="Reduces siRNA-binding; when associated with A-5." evidence="44">
    <original>N</original>
    <variation>A</variation>
    <location>
        <position position="6"/>
    </location>
</feature>
<feature type="mutagenesis site" description="Inhibits siRNA-binding and interaction with AGO2." evidence="44">
    <original>Y</original>
    <variation>A</variation>
    <location>
        <position position="9"/>
    </location>
</feature>
<feature type="mutagenesis site" description="Does not reduce siRNA-binding and interaction with AGO2." evidence="44">
    <original>N</original>
    <variation>A</variation>
    <location>
        <position position="30"/>
    </location>
</feature>
<feature type="mutagenesis site" description="Inhibits siRNA-binding and decreases interaction with AGO2; when associated with A-54 and A-55." evidence="44">
    <original>N</original>
    <variation>A</variation>
    <location>
        <position position="53"/>
    </location>
</feature>
<feature type="mutagenesis site" description="Inhibits siRNA-binding and decreases interaction with AGO2; when associated with A-53 and A-55." evidence="44">
    <original>K</original>
    <variation>A</variation>
    <location>
        <position position="54"/>
    </location>
</feature>
<feature type="mutagenesis site" description="Inhibits siRNA-binding and decreases interaction with AGO2; when associated with A-53 and A-54." evidence="44">
    <original>K</original>
    <variation>A</variation>
    <location>
        <position position="55"/>
    </location>
</feature>
<feature type="mutagenesis site" description="Reduces siRNA-binding and interaction with AGO2." evidence="44">
    <original>K</original>
    <variation>A</variation>
    <location>
        <position position="182"/>
    </location>
</feature>
<feature type="mutagenesis site" description="Reduces siRNA-binding and interaction with AGO2; when associated with A-187." evidence="44">
    <original>N</original>
    <variation>A</variation>
    <location>
        <position position="186"/>
    </location>
</feature>
<feature type="mutagenesis site" description="Reduces siRNA-binding and interaction with AGO2; when associated with A-186." evidence="44">
    <original>Q</original>
    <variation>A</variation>
    <location>
        <position position="187"/>
    </location>
</feature>
<feature type="mutagenesis site" description="Reduces siRNA-binding and interaction with AGO2." evidence="44">
    <original>H</original>
    <variation>A</variation>
    <location>
        <position position="207"/>
    </location>
</feature>
<feature type="mutagenesis site" description="Inhibits siRNA-binding and interaction with AGO2; when associated with A-235 and A-236." evidence="44">
    <original>N</original>
    <variation>A</variation>
    <location>
        <position position="234"/>
    </location>
</feature>
<feature type="mutagenesis site" description="Inhibits siRNA-binding and interaction with AGO2; when associated with A-234 and A-236." evidence="44">
    <original>K</original>
    <variation>A</variation>
    <location>
        <position position="235"/>
    </location>
</feature>
<feature type="mutagenesis site" description="Inhibits siRNA-binding and interaction with AGO2; when associated with A-234 and A-235." evidence="44">
    <original>K</original>
    <variation>A</variation>
    <location>
        <position position="236"/>
    </location>
</feature>
<feature type="mutagenesis site" description="Abrogates transcriptional activation by the MTAD region. No change in RNA polymerase II holoenzyme binding." evidence="14">
    <original>W</original>
    <variation>A</variation>
    <location>
        <position position="332"/>
    </location>
</feature>
<feature type="mutagenesis site" description="Abrogates transcriptional activation and RNA polymerase II binding by the MTAD region. No change in ATP binding and ATPase activities." evidence="14">
    <original>W</original>
    <variation>A</variation>
    <location>
        <position position="339"/>
    </location>
</feature>
<feature type="mutagenesis site" description="Abrogates transcriptional activation by the MTAD region. No change in RNA polymerase II holoenzyme binding." evidence="14">
    <original>W</original>
    <variation>A</variation>
    <location>
        <position position="342"/>
    </location>
</feature>
<feature type="mutagenesis site" description="Reduces NUP98-induced mRNA transcription and alternative splicing activities." evidence="52">
    <original>I</original>
    <variation>A</variation>
    <location>
        <position position="347"/>
    </location>
</feature>
<feature type="mutagenesis site" description="Inhibits interaction with AGO2, DICER1 and TARBP2. Abrogates helicase activity and transcriptional activation. Does not inhibit binding to origins of DNA replication." evidence="23 33 48 63">
    <original>K</original>
    <variation>R</variation>
    <variation>N</variation>
    <location>
        <position position="417"/>
    </location>
</feature>
<feature type="mutagenesis site" description="Reduces NUP98-induced mRNA transcription and alternative splicing activities." evidence="52">
    <original>K</original>
    <variation>R</variation>
    <location>
        <position position="417"/>
    </location>
</feature>
<feature type="mutagenesis site" description="Does not inhibit binding to origins of DNA replication; when associated with A-512." evidence="48">
    <original>D</original>
    <variation>A</variation>
    <location>
        <position position="511"/>
    </location>
</feature>
<feature type="mutagenesis site" description="Does not inhibit binding to origins of DNA replication; when associated with A-511." evidence="48">
    <original>E</original>
    <variation>A</variation>
    <location>
        <position position="512"/>
    </location>
</feature>
<feature type="mutagenesis site" description="Does not inhibit binding to origins of DNA replication." evidence="48">
    <original>S</original>
    <variation>L</variation>
    <location>
        <position position="543"/>
    </location>
</feature>
<feature type="mutagenesis site" description="Localizes in the nucleus and interacts with the importin complex." evidence="27">
    <original>R</original>
    <variation>A</variation>
    <location>
        <position position="1160"/>
    </location>
</feature>
<feature type="mutagenesis site" description="Localizes in the cytoplasm and does not interact with the importin complex." evidence="27">
    <original>K</original>
    <variation>A</variation>
    <location>
        <position position="1163"/>
    </location>
</feature>
<feature type="mutagenesis site" description="Abolishes nuclear localization." evidence="8">
    <location>
        <position position="1163"/>
    </location>
</feature>
<feature type="mutagenesis site" description="Localizes in the nucleus and the cytoplasm and interacts weakly with the importin complex." evidence="27">
    <original>R</original>
    <variation>A</variation>
    <location>
        <position position="1166"/>
    </location>
</feature>
<feature type="mutagenesis site" description="Abolishes nuclear localization." evidence="8">
    <original>R</original>
    <variation>L</variation>
    <location>
        <position position="1166"/>
    </location>
</feature>
<feature type="mutagenesis site" description="Abolishes nuclear localization." evidence="8">
    <location>
        <position position="1166"/>
    </location>
</feature>
<feature type="sequence conflict" description="In Ref. 1; AAB48855." evidence="71" ref="1">
    <original>S</original>
    <variation>T</variation>
    <location>
        <position position="20"/>
    </location>
</feature>
<feature type="sequence conflict" description="In Ref. 1; AAB48855." evidence="71" ref="1">
    <original>TM</original>
    <variation>HH</variation>
    <location>
        <begin position="108"/>
        <end position="109"/>
    </location>
</feature>
<feature type="sequence conflict" description="In Ref. 1; AAB48855." evidence="71" ref="1">
    <original>PPH</original>
    <variation>LHI</variation>
    <location>
        <begin position="114"/>
        <end position="116"/>
    </location>
</feature>
<feature type="sequence conflict" description="In Ref. 1; AAB48855." evidence="71" ref="1">
    <original>N</original>
    <variation>I</variation>
    <location>
        <position position="186"/>
    </location>
</feature>
<feature type="sequence conflict" description="In Ref. 1; AAB48855." evidence="71" ref="1">
    <original>S</original>
    <variation>T</variation>
    <location>
        <position position="260"/>
    </location>
</feature>
<feature type="sequence conflict" description="In Ref. 1; AAB48855." evidence="71" ref="1">
    <original>I</original>
    <variation>V</variation>
    <location>
        <position position="478"/>
    </location>
</feature>
<feature type="sequence conflict" description="In Ref. 1; AAB48855." evidence="71" ref="1">
    <original>D</original>
    <variation>S</variation>
    <location>
        <position position="521"/>
    </location>
</feature>
<feature type="sequence conflict" description="In Ref. 1; AAB48855." evidence="71" ref="1">
    <original>L</original>
    <variation>F</variation>
    <location>
        <position position="541"/>
    </location>
</feature>
<feature type="sequence conflict" description="In Ref. 1; AAB48855." evidence="71" ref="1">
    <original>IIEVYG</original>
    <variation>SLKLW</variation>
    <location>
        <begin position="560"/>
        <end position="565"/>
    </location>
</feature>
<feature type="sequence conflict" description="In Ref. 5; AAH25245." evidence="71" ref="5">
    <original>D</original>
    <variation>K</variation>
    <location>
        <position position="590"/>
    </location>
</feature>
<feature type="sequence conflict" description="In Ref. 1; AAB48855 and 3; CAA71668." evidence="71" ref="1 3">
    <original>A</original>
    <variation>S</variation>
    <location>
        <position position="749"/>
    </location>
</feature>
<feature type="sequence conflict" description="In Ref. 1; AAB48855 and 3; CAA71668." evidence="71" ref="1 3">
    <original>VRP</original>
    <variation>STA</variation>
    <location>
        <begin position="768"/>
        <end position="770"/>
    </location>
</feature>
<feature type="sequence conflict" description="In Ref. 5; AAI07882." evidence="71" ref="5">
    <original>A</original>
    <variation>G</variation>
    <location>
        <position position="828"/>
    </location>
</feature>
<feature type="sequence conflict" description="In Ref. 1; AAB48855." evidence="71" ref="1">
    <original>R</original>
    <variation>Q</variation>
    <location>
        <position position="899"/>
    </location>
</feature>
<feature type="sequence conflict" description="In Ref. 1; AAB48855." evidence="71" ref="1">
    <original>K</original>
    <variation>N</variation>
    <location>
        <position position="1037"/>
    </location>
</feature>
<feature type="sequence conflict" description="In Ref. 1; AAB48855 and 3; CAA71668." evidence="71" ref="1 3">
    <original>T</original>
    <variation>P</variation>
    <location>
        <position position="1063"/>
    </location>
</feature>
<feature type="sequence conflict" description="In Ref. 1; AAB48855." evidence="71" ref="1">
    <original>R</original>
    <variation>E</variation>
    <location>
        <position position="1140"/>
    </location>
</feature>
<feature type="sequence conflict" description="In Ref. 1; AAB48855." evidence="71" ref="1">
    <original>NSFRAGYG</original>
    <variation>TPSGRIC</variation>
    <location>
        <begin position="1204"/>
        <end position="1211"/>
    </location>
</feature>
<feature type="sequence conflict" description="In Ref. 1; AAB48855." evidence="71" ref="1">
    <original>FGQGRGGGGY</original>
    <variation>LDIEEEVAAIKLGYVSSVCRQ</variation>
    <location>
        <begin position="1261"/>
        <end position="1270"/>
    </location>
</feature>
<feature type="helix" evidence="88">
    <location>
        <begin position="4"/>
        <end position="14"/>
    </location>
</feature>
<feature type="strand" evidence="88">
    <location>
        <begin position="20"/>
        <end position="28"/>
    </location>
</feature>
<feature type="strand" evidence="88">
    <location>
        <begin position="31"/>
        <end position="39"/>
    </location>
</feature>
<feature type="strand" evidence="88">
    <location>
        <begin position="47"/>
        <end position="53"/>
    </location>
</feature>
<feature type="helix" evidence="88">
    <location>
        <begin position="54"/>
        <end position="71"/>
    </location>
</feature>
<feature type="helix" evidence="88">
    <location>
        <begin position="77"/>
        <end position="79"/>
    </location>
</feature>
<feature type="helix" evidence="87">
    <location>
        <begin position="170"/>
        <end position="173"/>
    </location>
</feature>
<feature type="turn" evidence="87">
    <location>
        <begin position="178"/>
        <end position="180"/>
    </location>
</feature>
<feature type="helix" evidence="87">
    <location>
        <begin position="181"/>
        <end position="191"/>
    </location>
</feature>
<feature type="strand" evidence="87">
    <location>
        <begin position="199"/>
        <end position="204"/>
    </location>
</feature>
<feature type="helix" evidence="87">
    <location>
        <begin position="206"/>
        <end position="208"/>
    </location>
</feature>
<feature type="strand" evidence="87">
    <location>
        <begin position="210"/>
        <end position="218"/>
    </location>
</feature>
<feature type="helix" evidence="87">
    <location>
        <begin position="220"/>
        <end position="222"/>
    </location>
</feature>
<feature type="strand" evidence="87">
    <location>
        <begin position="223"/>
        <end position="234"/>
    </location>
</feature>
<feature type="helix" evidence="87">
    <location>
        <begin position="235"/>
        <end position="252"/>
    </location>
</feature>
<feature type="helix" evidence="89">
    <location>
        <begin position="280"/>
        <end position="293"/>
    </location>
</feature>
<feature type="turn" evidence="89">
    <location>
        <begin position="341"/>
        <end position="344"/>
    </location>
</feature>
<feature type="turn" evidence="86">
    <location>
        <begin position="351"/>
        <end position="354"/>
    </location>
</feature>
<feature type="helix" evidence="89">
    <location>
        <begin position="357"/>
        <end position="374"/>
    </location>
</feature>
<feature type="helix" evidence="89">
    <location>
        <begin position="376"/>
        <end position="385"/>
    </location>
</feature>
<feature type="helix" evidence="89">
    <location>
        <begin position="389"/>
        <end position="393"/>
    </location>
</feature>
<feature type="helix" evidence="89">
    <location>
        <begin position="394"/>
        <end position="403"/>
    </location>
</feature>
<feature type="strand" evidence="89">
    <location>
        <begin position="405"/>
        <end position="411"/>
    </location>
</feature>
<feature type="helix" evidence="89">
    <location>
        <begin position="417"/>
        <end position="431"/>
    </location>
</feature>
<feature type="helix" evidence="89">
    <location>
        <begin position="435"/>
        <end position="437"/>
    </location>
</feature>
<feature type="strand" evidence="89">
    <location>
        <begin position="439"/>
        <end position="446"/>
    </location>
</feature>
<feature type="helix" evidence="89">
    <location>
        <begin position="447"/>
        <end position="460"/>
    </location>
</feature>
<feature type="strand" evidence="89">
    <location>
        <begin position="467"/>
        <end position="473"/>
    </location>
</feature>
<feature type="strand" evidence="89">
    <location>
        <begin position="476"/>
        <end position="478"/>
    </location>
</feature>
<feature type="strand" evidence="89">
    <location>
        <begin position="482"/>
        <end position="490"/>
    </location>
</feature>
<feature type="helix" evidence="89">
    <location>
        <begin position="491"/>
        <end position="497"/>
    </location>
</feature>
<feature type="strand" evidence="89">
    <location>
        <begin position="502"/>
        <end position="504"/>
    </location>
</feature>
<feature type="strand" evidence="89">
    <location>
        <begin position="506"/>
        <end position="510"/>
    </location>
</feature>
<feature type="helix" evidence="89">
    <location>
        <begin position="513"/>
        <end position="515"/>
    </location>
</feature>
<feature type="helix" evidence="89">
    <location>
        <begin position="518"/>
        <end position="533"/>
    </location>
</feature>
<feature type="strand" evidence="89">
    <location>
        <begin position="537"/>
        <end position="543"/>
    </location>
</feature>
<feature type="helix" evidence="89">
    <location>
        <begin position="549"/>
        <end position="554"/>
    </location>
</feature>
<feature type="strand" evidence="89">
    <location>
        <begin position="560"/>
        <end position="563"/>
    </location>
</feature>
<feature type="strand" evidence="89">
    <location>
        <begin position="570"/>
        <end position="573"/>
    </location>
</feature>
<feature type="helix" evidence="89">
    <location>
        <begin position="575"/>
        <end position="582"/>
    </location>
</feature>
<feature type="helix" evidence="89">
    <location>
        <begin position="618"/>
        <end position="624"/>
    </location>
</feature>
<feature type="helix" evidence="89">
    <location>
        <begin position="634"/>
        <end position="645"/>
    </location>
</feature>
<feature type="strand" evidence="89">
    <location>
        <begin position="652"/>
        <end position="656"/>
    </location>
</feature>
<feature type="helix" evidence="89">
    <location>
        <begin position="659"/>
        <end position="671"/>
    </location>
</feature>
<feature type="helix" evidence="89">
    <location>
        <begin position="674"/>
        <end position="676"/>
    </location>
</feature>
<feature type="turn" evidence="89">
    <location>
        <begin position="678"/>
        <end position="680"/>
    </location>
</feature>
<feature type="strand" evidence="89">
    <location>
        <begin position="681"/>
        <end position="687"/>
    </location>
</feature>
<feature type="helix" evidence="89">
    <location>
        <begin position="692"/>
        <end position="695"/>
    </location>
</feature>
<feature type="helix" evidence="89">
    <location>
        <begin position="696"/>
        <end position="698"/>
    </location>
</feature>
<feature type="strand" evidence="89">
    <location>
        <begin position="707"/>
        <end position="712"/>
    </location>
</feature>
<feature type="helix" evidence="89">
    <location>
        <begin position="715"/>
        <end position="718"/>
    </location>
</feature>
<feature type="strand" evidence="89">
    <location>
        <begin position="723"/>
        <end position="730"/>
    </location>
</feature>
<feature type="strand" evidence="89">
    <location>
        <begin position="733"/>
        <end position="736"/>
    </location>
</feature>
<feature type="turn" evidence="89">
    <location>
        <begin position="742"/>
        <end position="744"/>
    </location>
</feature>
<feature type="strand" evidence="89">
    <location>
        <begin position="748"/>
        <end position="752"/>
    </location>
</feature>
<feature type="helix" evidence="89">
    <location>
        <begin position="755"/>
        <end position="762"/>
    </location>
</feature>
<feature type="helix" evidence="89">
    <location>
        <begin position="763"/>
        <end position="765"/>
    </location>
</feature>
<feature type="strand" evidence="89">
    <location>
        <begin position="767"/>
        <end position="775"/>
    </location>
</feature>
<feature type="helix" evidence="89">
    <location>
        <begin position="779"/>
        <end position="783"/>
    </location>
</feature>
<feature type="helix" evidence="89">
    <location>
        <begin position="792"/>
        <end position="794"/>
    </location>
</feature>
<feature type="helix" evidence="89">
    <location>
        <begin position="799"/>
        <end position="807"/>
    </location>
</feature>
<feature type="helix" evidence="89">
    <location>
        <begin position="813"/>
        <end position="817"/>
    </location>
</feature>
<feature type="strand" evidence="89">
    <location>
        <begin position="820"/>
        <end position="822"/>
    </location>
</feature>
<feature type="helix" evidence="89">
    <location>
        <begin position="826"/>
        <end position="838"/>
    </location>
</feature>
<feature type="helix" evidence="89">
    <location>
        <begin position="850"/>
        <end position="857"/>
    </location>
</feature>
<feature type="strand" evidence="89">
    <location>
        <begin position="858"/>
        <end position="860"/>
    </location>
</feature>
<feature type="helix" evidence="89">
    <location>
        <begin position="862"/>
        <end position="873"/>
    </location>
</feature>
<feature type="helix" evidence="89">
    <location>
        <begin position="877"/>
        <end position="887"/>
    </location>
</feature>
<feature type="strand" evidence="89">
    <location>
        <begin position="896"/>
        <end position="899"/>
    </location>
</feature>
<feature type="helix" evidence="89">
    <location>
        <begin position="902"/>
        <end position="908"/>
    </location>
</feature>
<feature type="helix" evidence="89">
    <location>
        <begin position="914"/>
        <end position="928"/>
    </location>
</feature>
<feature type="helix" evidence="89">
    <location>
        <begin position="929"/>
        <end position="931"/>
    </location>
</feature>
<feature type="helix" evidence="89">
    <location>
        <begin position="933"/>
        <end position="942"/>
    </location>
</feature>
<feature type="helix" evidence="89">
    <location>
        <begin position="947"/>
        <end position="967"/>
    </location>
</feature>
<feature type="helix" evidence="89">
    <location>
        <begin position="971"/>
        <end position="974"/>
    </location>
</feature>
<feature type="strand" evidence="89">
    <location>
        <begin position="981"/>
        <end position="983"/>
    </location>
</feature>
<feature type="helix" evidence="89">
    <location>
        <begin position="986"/>
        <end position="999"/>
    </location>
</feature>
<feature type="strand" evidence="89">
    <location>
        <begin position="1003"/>
        <end position="1008"/>
    </location>
</feature>
<feature type="strand" evidence="89">
    <location>
        <begin position="1011"/>
        <end position="1013"/>
    </location>
</feature>
<feature type="strand" evidence="89">
    <location>
        <begin position="1019"/>
        <end position="1022"/>
    </location>
</feature>
<feature type="strand" evidence="89">
    <location>
        <begin position="1026"/>
        <end position="1028"/>
    </location>
</feature>
<feature type="strand" evidence="89">
    <location>
        <begin position="1041"/>
        <end position="1044"/>
    </location>
</feature>
<feature type="strand" evidence="89">
    <location>
        <begin position="1046"/>
        <end position="1058"/>
    </location>
</feature>
<feature type="helix" evidence="89">
    <location>
        <begin position="1064"/>
        <end position="1070"/>
    </location>
</feature>
<feature type="strand" evidence="89">
    <location>
        <begin position="1075"/>
        <end position="1077"/>
    </location>
</feature>
<feature type="strand" evidence="89">
    <location>
        <begin position="1079"/>
        <end position="1084"/>
    </location>
</feature>
<feature type="turn" evidence="89">
    <location>
        <begin position="1085"/>
        <end position="1087"/>
    </location>
</feature>
<feature type="strand" evidence="89">
    <location>
        <begin position="1088"/>
        <end position="1091"/>
    </location>
</feature>
<feature type="helix" evidence="89">
    <location>
        <begin position="1094"/>
        <end position="1116"/>
    </location>
</feature>
<feature type="helix" evidence="89">
    <location>
        <begin position="1118"/>
        <end position="1123"/>
    </location>
</feature>
<feature type="helix" evidence="89">
    <location>
        <begin position="1126"/>
        <end position="1139"/>
    </location>
</feature>
<feature type="helix" evidence="89">
    <location>
        <begin position="1142"/>
        <end position="1144"/>
    </location>
</feature>
<evidence type="ECO:0000250" key="1">
    <source>
        <dbReference type="UniProtKB" id="O70133"/>
    </source>
</evidence>
<evidence type="ECO:0000255" key="2"/>
<evidence type="ECO:0000255" key="3">
    <source>
        <dbReference type="PROSITE-ProRule" id="PRU00266"/>
    </source>
</evidence>
<evidence type="ECO:0000255" key="4">
    <source>
        <dbReference type="PROSITE-ProRule" id="PRU00541"/>
    </source>
</evidence>
<evidence type="ECO:0000255" key="5">
    <source>
        <dbReference type="PROSITE-ProRule" id="PRU00542"/>
    </source>
</evidence>
<evidence type="ECO:0000256" key="6">
    <source>
        <dbReference type="SAM" id="MobiDB-lite"/>
    </source>
</evidence>
<evidence type="ECO:0000269" key="7">
    <source>
    </source>
</evidence>
<evidence type="ECO:0000269" key="8">
    <source>
    </source>
</evidence>
<evidence type="ECO:0000269" key="9">
    <source>
    </source>
</evidence>
<evidence type="ECO:0000269" key="10">
    <source>
    </source>
</evidence>
<evidence type="ECO:0000269" key="11">
    <source>
    </source>
</evidence>
<evidence type="ECO:0000269" key="12">
    <source>
    </source>
</evidence>
<evidence type="ECO:0000269" key="13">
    <source>
    </source>
</evidence>
<evidence type="ECO:0000269" key="14">
    <source>
    </source>
</evidence>
<evidence type="ECO:0000269" key="15">
    <source>
    </source>
</evidence>
<evidence type="ECO:0000269" key="16">
    <source>
    </source>
</evidence>
<evidence type="ECO:0000269" key="17">
    <source>
    </source>
</evidence>
<evidence type="ECO:0000269" key="18">
    <source>
    </source>
</evidence>
<evidence type="ECO:0000269" key="19">
    <source>
    </source>
</evidence>
<evidence type="ECO:0000269" key="20">
    <source>
    </source>
</evidence>
<evidence type="ECO:0000269" key="21">
    <source>
    </source>
</evidence>
<evidence type="ECO:0000269" key="22">
    <source>
    </source>
</evidence>
<evidence type="ECO:0000269" key="23">
    <source>
    </source>
</evidence>
<evidence type="ECO:0000269" key="24">
    <source>
    </source>
</evidence>
<evidence type="ECO:0000269" key="25">
    <source>
    </source>
</evidence>
<evidence type="ECO:0000269" key="26">
    <source>
    </source>
</evidence>
<evidence type="ECO:0000269" key="27">
    <source>
    </source>
</evidence>
<evidence type="ECO:0000269" key="28">
    <source>
    </source>
</evidence>
<evidence type="ECO:0000269" key="29">
    <source>
    </source>
</evidence>
<evidence type="ECO:0000269" key="30">
    <source>
    </source>
</evidence>
<evidence type="ECO:0000269" key="31">
    <source>
    </source>
</evidence>
<evidence type="ECO:0000269" key="32">
    <source>
    </source>
</evidence>
<evidence type="ECO:0000269" key="33">
    <source>
    </source>
</evidence>
<evidence type="ECO:0000269" key="34">
    <source>
    </source>
</evidence>
<evidence type="ECO:0000269" key="35">
    <source>
    </source>
</evidence>
<evidence type="ECO:0000269" key="36">
    <source>
    </source>
</evidence>
<evidence type="ECO:0000269" key="37">
    <source>
    </source>
</evidence>
<evidence type="ECO:0000269" key="38">
    <source>
    </source>
</evidence>
<evidence type="ECO:0000269" key="39">
    <source>
    </source>
</evidence>
<evidence type="ECO:0000269" key="40">
    <source>
    </source>
</evidence>
<evidence type="ECO:0000269" key="41">
    <source>
    </source>
</evidence>
<evidence type="ECO:0000269" key="42">
    <source>
    </source>
</evidence>
<evidence type="ECO:0000269" key="43">
    <source>
    </source>
</evidence>
<evidence type="ECO:0000269" key="44">
    <source>
    </source>
</evidence>
<evidence type="ECO:0000269" key="45">
    <source>
    </source>
</evidence>
<evidence type="ECO:0000269" key="46">
    <source>
    </source>
</evidence>
<evidence type="ECO:0000269" key="47">
    <source>
    </source>
</evidence>
<evidence type="ECO:0000269" key="48">
    <source>
    </source>
</evidence>
<evidence type="ECO:0000269" key="49">
    <source>
    </source>
</evidence>
<evidence type="ECO:0000269" key="50">
    <source>
    </source>
</evidence>
<evidence type="ECO:0000269" key="51">
    <source>
    </source>
</evidence>
<evidence type="ECO:0000269" key="52">
    <source>
    </source>
</evidence>
<evidence type="ECO:0000269" key="53">
    <source>
    </source>
</evidence>
<evidence type="ECO:0000269" key="54">
    <source>
    </source>
</evidence>
<evidence type="ECO:0000269" key="55">
    <source>
    </source>
</evidence>
<evidence type="ECO:0000269" key="56">
    <source>
    </source>
</evidence>
<evidence type="ECO:0000269" key="57">
    <source>
    </source>
</evidence>
<evidence type="ECO:0000269" key="58">
    <source>
    </source>
</evidence>
<evidence type="ECO:0000269" key="59">
    <source>
    </source>
</evidence>
<evidence type="ECO:0000269" key="60">
    <source>
    </source>
</evidence>
<evidence type="ECO:0000269" key="61">
    <source>
    </source>
</evidence>
<evidence type="ECO:0000269" key="62">
    <source>
    </source>
</evidence>
<evidence type="ECO:0000269" key="63">
    <source>
    </source>
</evidence>
<evidence type="ECO:0000269" key="64">
    <source>
    </source>
</evidence>
<evidence type="ECO:0000269" key="65">
    <source>
    </source>
</evidence>
<evidence type="ECO:0000303" key="66">
    <source>
    </source>
</evidence>
<evidence type="ECO:0000303" key="67">
    <source>
    </source>
</evidence>
<evidence type="ECO:0000303" key="68">
    <source>
    </source>
</evidence>
<evidence type="ECO:0000303" key="69">
    <source>
    </source>
</evidence>
<evidence type="ECO:0000303" key="70">
    <source>
    </source>
</evidence>
<evidence type="ECO:0000305" key="71"/>
<evidence type="ECO:0000305" key="72">
    <source>
    </source>
</evidence>
<evidence type="ECO:0000305" key="73">
    <source>
    </source>
</evidence>
<evidence type="ECO:0000312" key="74">
    <source>
        <dbReference type="HGNC" id="HGNC:2750"/>
    </source>
</evidence>
<evidence type="ECO:0007744" key="75">
    <source>
        <dbReference type="PDB" id="3LLM"/>
    </source>
</evidence>
<evidence type="ECO:0007744" key="76">
    <source>
        <dbReference type="PDB" id="3VYX"/>
    </source>
</evidence>
<evidence type="ECO:0007744" key="77">
    <source>
        <dbReference type="PDB" id="3VYY"/>
    </source>
</evidence>
<evidence type="ECO:0007744" key="78">
    <source>
    </source>
</evidence>
<evidence type="ECO:0007744" key="79">
    <source>
    </source>
</evidence>
<evidence type="ECO:0007744" key="80">
    <source>
    </source>
</evidence>
<evidence type="ECO:0007744" key="81">
    <source>
    </source>
</evidence>
<evidence type="ECO:0007744" key="82">
    <source>
    </source>
</evidence>
<evidence type="ECO:0007744" key="83">
    <source>
    </source>
</evidence>
<evidence type="ECO:0007744" key="84">
    <source>
    </source>
</evidence>
<evidence type="ECO:0007744" key="85">
    <source>
    </source>
</evidence>
<evidence type="ECO:0007829" key="86">
    <source>
        <dbReference type="PDB" id="3LLM"/>
    </source>
</evidence>
<evidence type="ECO:0007829" key="87">
    <source>
        <dbReference type="PDB" id="3VYX"/>
    </source>
</evidence>
<evidence type="ECO:0007829" key="88">
    <source>
        <dbReference type="PDB" id="3VYY"/>
    </source>
</evidence>
<evidence type="ECO:0007829" key="89">
    <source>
        <dbReference type="PDB" id="8SZP"/>
    </source>
</evidence>